<keyword id="KW-0148">Chlorophyll</keyword>
<keyword id="KW-0150">Chloroplast</keyword>
<keyword id="KW-0157">Chromophore</keyword>
<keyword id="KW-0472">Membrane</keyword>
<keyword id="KW-0602">Photosynthesis</keyword>
<keyword id="KW-0604">Photosystem II</keyword>
<keyword id="KW-0934">Plastid</keyword>
<keyword id="KW-1185">Reference proteome</keyword>
<keyword id="KW-0793">Thylakoid</keyword>
<keyword id="KW-0812">Transmembrane</keyword>
<keyword id="KW-1133">Transmembrane helix</keyword>
<feature type="chain" id="PRO_0000077500" description="Photosystem II CP47 reaction center protein">
    <location>
        <begin position="1"/>
        <end position="508"/>
    </location>
</feature>
<feature type="transmembrane region" description="Helical" evidence="1">
    <location>
        <begin position="21"/>
        <end position="36"/>
    </location>
</feature>
<feature type="transmembrane region" description="Helical" evidence="1">
    <location>
        <begin position="101"/>
        <end position="115"/>
    </location>
</feature>
<feature type="transmembrane region" description="Helical" evidence="1">
    <location>
        <begin position="140"/>
        <end position="156"/>
    </location>
</feature>
<feature type="transmembrane region" description="Helical" evidence="1">
    <location>
        <begin position="203"/>
        <end position="218"/>
    </location>
</feature>
<feature type="transmembrane region" description="Helical" evidence="1">
    <location>
        <begin position="237"/>
        <end position="252"/>
    </location>
</feature>
<feature type="transmembrane region" description="Helical" evidence="1">
    <location>
        <begin position="457"/>
        <end position="472"/>
    </location>
</feature>
<feature type="sequence conflict" description="In Ref. 1; CAA38541." evidence="2" ref="1">
    <original>A</original>
    <variation>V</variation>
    <location>
        <position position="488"/>
    </location>
</feature>
<comment type="function">
    <text evidence="1">One of the components of the core complex of photosystem II (PSII). It binds chlorophyll and helps catalyze the primary light-induced photochemical processes of PSII. PSII is a light-driven water:plastoquinone oxidoreductase, using light energy to abstract electrons from H(2)O, generating O(2) and a proton gradient subsequently used for ATP formation.</text>
</comment>
<comment type="cofactor">
    <text evidence="1">Binds multiple chlorophylls. PSII binds additional chlorophylls, carotenoids and specific lipids.</text>
</comment>
<comment type="subunit">
    <text evidence="1">PSII is composed of 1 copy each of membrane proteins PsbA, PsbB, PsbC, PsbD, PsbE, PsbF, PsbH, PsbI, PsbJ, PsbK, PsbL, PsbM, PsbT, PsbX, PsbY, PsbZ, Psb30/Ycf12, at least 3 peripheral proteins of the oxygen-evolving complex and a large number of cofactors. It forms dimeric complexes.</text>
</comment>
<comment type="subcellular location">
    <subcellularLocation>
        <location evidence="1">Plastid</location>
        <location evidence="1">Chloroplast thylakoid membrane</location>
        <topology evidence="1">Multi-pass membrane protein</topology>
    </subcellularLocation>
</comment>
<comment type="similarity">
    <text evidence="1">Belongs to the PsbB/PsbC family. PsbB subfamily.</text>
</comment>
<protein>
    <recommendedName>
        <fullName evidence="1">Photosystem II CP47 reaction center protein</fullName>
    </recommendedName>
    <alternativeName>
        <fullName evidence="1">PSII 47 kDa protein</fullName>
    </alternativeName>
    <alternativeName>
        <fullName evidence="1">Protein CP-47</fullName>
    </alternativeName>
</protein>
<accession>P24065</accession>
<gene>
    <name evidence="1" type="primary">psbB</name>
</gene>
<geneLocation type="chloroplast"/>
<reference key="1">
    <citation type="journal article" date="1991" name="Curr. Genet.">
        <title>Differential expression of the psbB and psbH genes encoding the 47 kDa chlorophyll a-protein and the 10 kDa phosphoprotein of photosystem II during chloroplast development in wheat.</title>
        <authorList>
            <person name="Hird S.M."/>
            <person name="Webber A.N."/>
            <person name="Wilson R.J."/>
            <person name="Dyer T.A."/>
            <person name="Gray J.C."/>
        </authorList>
    </citation>
    <scope>NUCLEOTIDE SEQUENCE [GENOMIC DNA]</scope>
    <source>
        <strain>cv. Mardler</strain>
    </source>
</reference>
<reference key="2">
    <citation type="journal article" date="2000" name="Plant Mol. Biol. Rep.">
        <title>Chinese spring wheat (Triticum aestivum L.) chloroplast genome: complete sequence and contig clones.</title>
        <authorList>
            <person name="Ogihara Y."/>
            <person name="Isono K."/>
            <person name="Kojima T."/>
            <person name="Endo A."/>
            <person name="Hanaoka M."/>
            <person name="Shiina T."/>
            <person name="Terachi T."/>
            <person name="Utsugi S."/>
            <person name="Murata M."/>
            <person name="Mori N."/>
            <person name="Takumi S."/>
            <person name="Ikeo K."/>
            <person name="Gojobori T."/>
            <person name="Murai R."/>
            <person name="Murai K."/>
            <person name="Matsuoka Y."/>
            <person name="Ohnishi Y."/>
            <person name="Tajiri H."/>
            <person name="Tsunewaki K."/>
        </authorList>
    </citation>
    <scope>NUCLEOTIDE SEQUENCE [LARGE SCALE GENOMIC DNA]</scope>
    <source>
        <strain>cv. Chinese Spring</strain>
    </source>
</reference>
<reference key="3">
    <citation type="journal article" date="1990" name="Plant Mol. Biol.">
        <title>Nucleotide sequence of a wheat chloroplast gene encoding the proteolytic subunit of an ATP-dependent protease.</title>
        <authorList>
            <person name="Gray J.C."/>
            <person name="Hird S.M."/>
            <person name="Dyer T.A."/>
        </authorList>
    </citation>
    <scope>NUCLEOTIDE SEQUENCE [GENOMIC DNA] OF 1-18</scope>
    <source>
        <strain>cv. Mardler</strain>
    </source>
</reference>
<sequence>MGLPWYRVHTVVLNDPGRLLAVHIMHTALVSGWAGSMALYELAVFDPSDPVLDPMWRQGMFVIPFMTRLGITDSWGGWSISGGTVTNPGIWSYEGVAGTHIVFSGLCFLAAIWHWVYWDLEIFSDERTGKPSLDLPKIFGIHLFLAGVACFGFGAFHVTGLYGPGIWVSDPYGLTGKVQAVNPAWGAEGFDPFVPGGIASHHIAAGTLGILAGLFHLSVRPPQRLYKGLRMGNIETVLSSSIAAVFFAAFVVAGTMWYGSATTPIELFGPTRYQWDQGYFQQEIYRRVSNGLAENLSLSEAWSKIPEKLAFYDYIGNNPAKGGLFRAGSMDNGDGIAVGWLGHPVFRDKEGRELFVRRMPTFFETFPVVLVDEEGIVRADVPFRRAESKYSVEQVGVTVEFYGGELNGVSYSDPATVKKYARRSQLGEIFELDRATLKSDGVFRSSPRGWFTFGHATFALLFFFGHIWHGARTLFRDVFAGIDPDLDAQVEFGTFQKVGDPTTRKQAA</sequence>
<organism>
    <name type="scientific">Triticum aestivum</name>
    <name type="common">Wheat</name>
    <dbReference type="NCBI Taxonomy" id="4565"/>
    <lineage>
        <taxon>Eukaryota</taxon>
        <taxon>Viridiplantae</taxon>
        <taxon>Streptophyta</taxon>
        <taxon>Embryophyta</taxon>
        <taxon>Tracheophyta</taxon>
        <taxon>Spermatophyta</taxon>
        <taxon>Magnoliopsida</taxon>
        <taxon>Liliopsida</taxon>
        <taxon>Poales</taxon>
        <taxon>Poaceae</taxon>
        <taxon>BOP clade</taxon>
        <taxon>Pooideae</taxon>
        <taxon>Triticodae</taxon>
        <taxon>Triticeae</taxon>
        <taxon>Triticinae</taxon>
        <taxon>Triticum</taxon>
    </lineage>
</organism>
<proteinExistence type="inferred from homology"/>
<dbReference type="EMBL" id="X54749">
    <property type="protein sequence ID" value="CAA38541.1"/>
    <property type="molecule type" value="Genomic_DNA"/>
</dbReference>
<dbReference type="EMBL" id="AB042240">
    <property type="protein sequence ID" value="BAB47059.1"/>
    <property type="molecule type" value="Genomic_DNA"/>
</dbReference>
<dbReference type="EMBL" id="X54484">
    <property type="protein sequence ID" value="CAA38353.1"/>
    <property type="molecule type" value="Genomic_DNA"/>
</dbReference>
<dbReference type="PIR" id="S14140">
    <property type="entry name" value="S14140"/>
</dbReference>
<dbReference type="RefSeq" id="NP_114283.1">
    <property type="nucleotide sequence ID" value="NC_002762.1"/>
</dbReference>
<dbReference type="SMR" id="P24065"/>
<dbReference type="STRING" id="4565.P24065"/>
<dbReference type="PaxDb" id="4565-EPlTAEP00000010015"/>
<dbReference type="EnsemblPlants" id="TraesKAR6B01G0219390.1">
    <property type="protein sequence ID" value="cds.TraesKAR6B01G0219390.1"/>
    <property type="gene ID" value="TraesKAR6B01G0219390"/>
</dbReference>
<dbReference type="EnsemblPlants" id="TraesKARUn01G0026010.1">
    <property type="protein sequence ID" value="cds.TraesKARUn01G0026010.1"/>
    <property type="gene ID" value="TraesKARUn01G0026010"/>
</dbReference>
<dbReference type="EnsemblPlants" id="TraesKARUn01G0032630.1">
    <property type="protein sequence ID" value="cds.TraesKARUn01G0032630.1"/>
    <property type="gene ID" value="TraesKARUn01G0032630"/>
</dbReference>
<dbReference type="EnsemblPlants" id="TraesKARUn01G0033170.1">
    <property type="protein sequence ID" value="cds.TraesKARUn01G0033170.1"/>
    <property type="gene ID" value="TraesKARUn01G0033170"/>
</dbReference>
<dbReference type="EnsemblPlants" id="TraesKARUn01G0033430.1">
    <property type="protein sequence ID" value="cds.TraesKARUn01G0033430.1"/>
    <property type="gene ID" value="TraesKARUn01G0033430"/>
</dbReference>
<dbReference type="EnsemblPlants" id="TraesKARUn01G0033640.1">
    <property type="protein sequence ID" value="cds.TraesKARUn01G0033640.1"/>
    <property type="gene ID" value="TraesKARUn01G0033640"/>
</dbReference>
<dbReference type="EnsemblPlants" id="TraesKARUn01G0033700.1">
    <property type="protein sequence ID" value="cds.TraesKARUn01G0033700.1"/>
    <property type="gene ID" value="TraesKARUn01G0033700"/>
</dbReference>
<dbReference type="EnsemblPlants" id="TraesKARUn01G0034740.1">
    <property type="protein sequence ID" value="cds.TraesKARUn01G0034740.1"/>
    <property type="gene ID" value="TraesKARUn01G0034740"/>
</dbReference>
<dbReference type="EnsemblPlants" id="TraesKARUn01G0036760.1">
    <property type="protein sequence ID" value="cds.TraesKARUn01G0036760.1"/>
    <property type="gene ID" value="TraesKARUn01G0036760"/>
</dbReference>
<dbReference type="EnsemblPlants" id="TraesKARUn01G0037040.1">
    <property type="protein sequence ID" value="cds.TraesKARUn01G0037040.1"/>
    <property type="gene ID" value="TraesKARUn01G0037040"/>
</dbReference>
<dbReference type="EnsemblPlants" id="TraesKARUn01G0060580.1">
    <property type="protein sequence ID" value="cds.TraesKARUn01G0060580.1"/>
    <property type="gene ID" value="TraesKARUn01G0060580"/>
</dbReference>
<dbReference type="EnsemblPlants" id="TraesKARUn01G0061190.1">
    <property type="protein sequence ID" value="cds.TraesKARUn01G0061190.1"/>
    <property type="gene ID" value="TraesKARUn01G0061190"/>
</dbReference>
<dbReference type="EnsemblPlants" id="TraesKARUn01G0062400.1">
    <property type="protein sequence ID" value="cds.TraesKARUn01G0062400.1"/>
    <property type="gene ID" value="TraesKARUn01G0062400"/>
</dbReference>
<dbReference type="EnsemblPlants" id="TraesKARUn01G0065200.1">
    <property type="protein sequence ID" value="cds.TraesKARUn01G0065200.1"/>
    <property type="gene ID" value="TraesKARUn01G0065200"/>
</dbReference>
<dbReference type="EnsemblPlants" id="TraesKARUn01G0065380.1">
    <property type="protein sequence ID" value="cds.TraesKARUn01G0065380.1"/>
    <property type="gene ID" value="TraesKARUn01G0065380"/>
</dbReference>
<dbReference type="EnsemblPlants" id="TraesKARUn01G0066380.1">
    <property type="protein sequence ID" value="cds.TraesKARUn01G0066380.1"/>
    <property type="gene ID" value="TraesKARUn01G0066380"/>
</dbReference>
<dbReference type="EnsemblPlants" id="TraesKARUn01G0066660.1">
    <property type="protein sequence ID" value="cds.TraesKARUn01G0066660.1"/>
    <property type="gene ID" value="TraesKARUn01G0066660"/>
</dbReference>
<dbReference type="EnsemblPlants" id="TraesKARUn01G0067460.1">
    <property type="protein sequence ID" value="cds.TraesKARUn01G0067460.1"/>
    <property type="gene ID" value="TraesKARUn01G0067460"/>
</dbReference>
<dbReference type="EnsemblPlants" id="TraesKARUn01G0070120.1">
    <property type="protein sequence ID" value="cds.TraesKARUn01G0070120.1"/>
    <property type="gene ID" value="TraesKARUn01G0070120"/>
</dbReference>
<dbReference type="EnsemblPlants" id="TraesKARUn01G0071150.1">
    <property type="protein sequence ID" value="cds.TraesKARUn01G0071150.1"/>
    <property type="gene ID" value="TraesKARUn01G0071150"/>
</dbReference>
<dbReference type="EnsemblPlants" id="TraesKARUn01G0071370.1">
    <property type="protein sequence ID" value="cds.TraesKARUn01G0071370.1"/>
    <property type="gene ID" value="TraesKARUn01G0071370"/>
</dbReference>
<dbReference type="EnsemblPlants" id="TraesKARUn01G0072360.1">
    <property type="protein sequence ID" value="cds.TraesKARUn01G0072360.1"/>
    <property type="gene ID" value="TraesKARUn01G0072360"/>
</dbReference>
<dbReference type="EnsemblPlants" id="TraesKARUn01G0074910.1">
    <property type="protein sequence ID" value="cds.TraesKARUn01G0074910.1"/>
    <property type="gene ID" value="TraesKARUn01G0074910"/>
</dbReference>
<dbReference type="EnsemblPlants" id="TraesKARUn01G0075100.1">
    <property type="protein sequence ID" value="cds.TraesKARUn01G0075100.1"/>
    <property type="gene ID" value="TraesKARUn01G0075100"/>
</dbReference>
<dbReference type="EnsemblPlants" id="TraesKARUn01G0076330.1">
    <property type="protein sequence ID" value="cds.TraesKARUn01G0076330.1"/>
    <property type="gene ID" value="TraesKARUn01G0076330"/>
</dbReference>
<dbReference type="EnsemblPlants" id="TraesKARUn01G0076500.1">
    <property type="protein sequence ID" value="cds.TraesKARUn01G0076500.1"/>
    <property type="gene ID" value="TraesKARUn01G0076500"/>
</dbReference>
<dbReference type="EnsemblPlants" id="TraesKARUn01G0076550.1">
    <property type="protein sequence ID" value="cds.TraesKARUn01G0076550.1"/>
    <property type="gene ID" value="TraesKARUn01G0076550"/>
</dbReference>
<dbReference type="EnsemblPlants" id="TraesKARUn01G0079210.1">
    <property type="protein sequence ID" value="cds.TraesKARUn01G0079210.1"/>
    <property type="gene ID" value="TraesKARUn01G0079210"/>
</dbReference>
<dbReference type="EnsemblPlants" id="TraesKARUn01G0080630.1">
    <property type="protein sequence ID" value="cds.TraesKARUn01G0080630.1"/>
    <property type="gene ID" value="TraesKARUn01G0080630"/>
</dbReference>
<dbReference type="EnsemblPlants" id="TraesKARUn01G0081770.1">
    <property type="protein sequence ID" value="cds.TraesKARUn01G0081770.1"/>
    <property type="gene ID" value="TraesKARUn01G0081770"/>
</dbReference>
<dbReference type="EnsemblPlants" id="TraesKARUn01G0084650.1">
    <property type="protein sequence ID" value="cds.TraesKARUn01G0084650.1"/>
    <property type="gene ID" value="TraesKARUn01G0084650"/>
</dbReference>
<dbReference type="EnsemblPlants" id="TraesKARUn01G0086360.1">
    <property type="protein sequence ID" value="cds.TraesKARUn01G0086360.1"/>
    <property type="gene ID" value="TraesKARUn01G0086360"/>
</dbReference>
<dbReference type="EnsemblPlants" id="TraesKARUn01G0086740.1">
    <property type="protein sequence ID" value="cds.TraesKARUn01G0086740.1"/>
    <property type="gene ID" value="TraesKARUn01G0086740"/>
</dbReference>
<dbReference type="EnsemblPlants" id="TraesKARUn01G0087220.1">
    <property type="protein sequence ID" value="cds.TraesKARUn01G0087220.1"/>
    <property type="gene ID" value="TraesKARUn01G0087220"/>
</dbReference>
<dbReference type="EnsemblPlants" id="TraesKARUn01G0087720.1">
    <property type="protein sequence ID" value="cds.TraesKARUn01G0087720.1"/>
    <property type="gene ID" value="TraesKARUn01G0087720"/>
</dbReference>
<dbReference type="EnsemblPlants" id="TraesKARUn01G0088070.1">
    <property type="protein sequence ID" value="cds.TraesKARUn01G0088070.1"/>
    <property type="gene ID" value="TraesKARUn01G0088070"/>
</dbReference>
<dbReference type="EnsemblPlants" id="TraesKARUn01G0088200.1">
    <property type="protein sequence ID" value="cds.TraesKARUn01G0088200.1"/>
    <property type="gene ID" value="TraesKARUn01G0088200"/>
</dbReference>
<dbReference type="EnsemblPlants" id="TraesKARUn01G0089130.1">
    <property type="protein sequence ID" value="cds.TraesKARUn01G0089130.1"/>
    <property type="gene ID" value="TraesKARUn01G0089130"/>
</dbReference>
<dbReference type="EnsemblPlants" id="TraesKARUn01G0089680.1">
    <property type="protein sequence ID" value="cds.TraesKARUn01G0089680.1"/>
    <property type="gene ID" value="TraesKARUn01G0089680"/>
</dbReference>
<dbReference type="EnsemblPlants" id="TraesKARUn01G0091130.1">
    <property type="protein sequence ID" value="cds.TraesKARUn01G0091130.1"/>
    <property type="gene ID" value="TraesKARUn01G0091130"/>
</dbReference>
<dbReference type="EnsemblPlants" id="TraesKARUn01G0100700.1">
    <property type="protein sequence ID" value="cds.TraesKARUn01G0100700.1"/>
    <property type="gene ID" value="TraesKARUn01G0100700"/>
</dbReference>
<dbReference type="EnsemblPlants" id="TraesKARUn01G0101010.1">
    <property type="protein sequence ID" value="cds.TraesKARUn01G0101010.1"/>
    <property type="gene ID" value="TraesKARUn01G0101010"/>
</dbReference>
<dbReference type="EnsemblPlants" id="TraesKARUn01G0101470.1">
    <property type="protein sequence ID" value="cds.TraesKARUn01G0101470.1"/>
    <property type="gene ID" value="TraesKARUn01G0101470"/>
</dbReference>
<dbReference type="EnsemblPlants" id="TraesKARUn01G0101920.1">
    <property type="protein sequence ID" value="cds.TraesKARUn01G0101920.1"/>
    <property type="gene ID" value="TraesKARUn01G0101920"/>
</dbReference>
<dbReference type="EnsemblPlants" id="TraesKARUn01G0105040.1">
    <property type="protein sequence ID" value="cds.TraesKARUn01G0105040.1"/>
    <property type="gene ID" value="TraesKARUn01G0105040"/>
</dbReference>
<dbReference type="EnsemblPlants" id="TraesKARUn01G0106250.1">
    <property type="protein sequence ID" value="cds.TraesKARUn01G0106250.1"/>
    <property type="gene ID" value="TraesKARUn01G0106250"/>
</dbReference>
<dbReference type="EnsemblPlants" id="TraesKARUn01G0106650.1">
    <property type="protein sequence ID" value="cds.TraesKARUn01G0106650.1"/>
    <property type="gene ID" value="TraesKARUn01G0106650"/>
</dbReference>
<dbReference type="EnsemblPlants" id="TraesKARUn01G0108290.1">
    <property type="protein sequence ID" value="cds.TraesKARUn01G0108290.1"/>
    <property type="gene ID" value="TraesKARUn01G0108290"/>
</dbReference>
<dbReference type="EnsemblPlants" id="TraesKARUn01G0113330.1">
    <property type="protein sequence ID" value="cds.TraesKARUn01G0113330.1"/>
    <property type="gene ID" value="TraesKARUn01G0113330"/>
</dbReference>
<dbReference type="EnsemblPlants" id="TraesKARUn01G0113700.1">
    <property type="protein sequence ID" value="cds.TraesKARUn01G0113700.1"/>
    <property type="gene ID" value="TraesKARUn01G0113700"/>
</dbReference>
<dbReference type="EnsemblPlants" id="TraesKARUn01G0116470.1">
    <property type="protein sequence ID" value="cds.TraesKARUn01G0116470.1"/>
    <property type="gene ID" value="TraesKARUn01G0116470"/>
</dbReference>
<dbReference type="EnsemblPlants" id="TraesKARUn01G0122840.1">
    <property type="protein sequence ID" value="cds.TraesKARUn01G0122840.1"/>
    <property type="gene ID" value="TraesKARUn01G0122840"/>
</dbReference>
<dbReference type="EnsemblPlants" id="TraesKARUn01G0123940.1">
    <property type="protein sequence ID" value="cds.TraesKARUn01G0123940.1"/>
    <property type="gene ID" value="TraesKARUn01G0123940"/>
</dbReference>
<dbReference type="EnsemblPlants" id="TraesKARUn01G0124340.1">
    <property type="protein sequence ID" value="cds.TraesKARUn01G0124340.1"/>
    <property type="gene ID" value="TraesKARUn01G0124340"/>
</dbReference>
<dbReference type="EnsemblPlants" id="TraesKARUn01G0124370.1">
    <property type="protein sequence ID" value="cds.TraesKARUn01G0124370.1"/>
    <property type="gene ID" value="TraesKARUn01G0124370"/>
</dbReference>
<dbReference type="EnsemblPlants" id="TraesKARUn01G0124510.1">
    <property type="protein sequence ID" value="cds.TraesKARUn01G0124510.1"/>
    <property type="gene ID" value="TraesKARUn01G0124510"/>
</dbReference>
<dbReference type="EnsemblPlants" id="TraesKARUn01G0125600.1">
    <property type="protein sequence ID" value="cds.TraesKARUn01G0125600.1"/>
    <property type="gene ID" value="TraesKARUn01G0125600"/>
</dbReference>
<dbReference type="EnsemblPlants" id="TraesKARUn01G0127400.1">
    <property type="protein sequence ID" value="cds.TraesKARUn01G0127400.1"/>
    <property type="gene ID" value="TraesKARUn01G0127400"/>
</dbReference>
<dbReference type="EnsemblPlants" id="TraesKARUn01G0127680.1">
    <property type="protein sequence ID" value="cds.TraesKARUn01G0127680.1"/>
    <property type="gene ID" value="TraesKARUn01G0127680"/>
</dbReference>
<dbReference type="EnsemblPlants" id="TraesKARUn01G0132640.1">
    <property type="protein sequence ID" value="cds.TraesKARUn01G0132640.1"/>
    <property type="gene ID" value="TraesKARUn01G0132640"/>
</dbReference>
<dbReference type="EnsemblPlants" id="TraesKARUn01G0136200.1">
    <property type="protein sequence ID" value="cds.TraesKARUn01G0136200.1"/>
    <property type="gene ID" value="TraesKARUn01G0136200"/>
</dbReference>
<dbReference type="EnsemblPlants" id="TraesKARUn01G0137250.1">
    <property type="protein sequence ID" value="cds.TraesKARUn01G0137250.1"/>
    <property type="gene ID" value="TraesKARUn01G0137250"/>
</dbReference>
<dbReference type="EnsemblPlants" id="TraesKARUn01G0137540.1">
    <property type="protein sequence ID" value="cds.TraesKARUn01G0137540.1"/>
    <property type="gene ID" value="TraesKARUn01G0137540"/>
</dbReference>
<dbReference type="EnsemblPlants" id="TraesKARUn01G0137790.1">
    <property type="protein sequence ID" value="cds.TraesKARUn01G0137790.1"/>
    <property type="gene ID" value="TraesKARUn01G0137790"/>
</dbReference>
<dbReference type="EnsemblPlants" id="TraesKARUn01G0139580.1">
    <property type="protein sequence ID" value="cds.TraesKARUn01G0139580.1"/>
    <property type="gene ID" value="TraesKARUn01G0139580"/>
</dbReference>
<dbReference type="EnsemblPlants" id="TraesKARUn01G0142850.1">
    <property type="protein sequence ID" value="cds.TraesKARUn01G0142850.1"/>
    <property type="gene ID" value="TraesKARUn01G0142850"/>
</dbReference>
<dbReference type="EnsemblPlants" id="TraesKARUn01G0143180.1">
    <property type="protein sequence ID" value="cds.TraesKARUn01G0143180.1"/>
    <property type="gene ID" value="TraesKARUn01G0143180"/>
</dbReference>
<dbReference type="EnsemblPlants" id="TraesKARUn01G0144770.1">
    <property type="protein sequence ID" value="cds.TraesKARUn01G0144770.1"/>
    <property type="gene ID" value="TraesKARUn01G0144770"/>
</dbReference>
<dbReference type="EnsemblPlants" id="TraesKARUn01G0147260.1">
    <property type="protein sequence ID" value="cds.TraesKARUn01G0147260.1"/>
    <property type="gene ID" value="TraesKARUn01G0147260"/>
</dbReference>
<dbReference type="EnsemblPlants" id="TraesKARUn01G0147290.1">
    <property type="protein sequence ID" value="cds.TraesKARUn01G0147290.1"/>
    <property type="gene ID" value="TraesKARUn01G0147290"/>
</dbReference>
<dbReference type="EnsemblPlants" id="TraesKARUn01G0147600.1">
    <property type="protein sequence ID" value="cds.TraesKARUn01G0147600.1"/>
    <property type="gene ID" value="TraesKARUn01G0147600"/>
</dbReference>
<dbReference type="EnsemblPlants" id="TraesKARUn01G0147900.1">
    <property type="protein sequence ID" value="cds.TraesKARUn01G0147900.1"/>
    <property type="gene ID" value="TraesKARUn01G0147900"/>
</dbReference>
<dbReference type="EnsemblPlants" id="TraesKARUn01G0148780.1">
    <property type="protein sequence ID" value="cds.TraesKARUn01G0148780.1"/>
    <property type="gene ID" value="TraesKARUn01G0148780"/>
</dbReference>
<dbReference type="EnsemblPlants" id="TraesKARUn01G0152080.1">
    <property type="protein sequence ID" value="cds.TraesKARUn01G0152080.1"/>
    <property type="gene ID" value="TraesKARUn01G0152080"/>
</dbReference>
<dbReference type="EnsemblPlants" id="TraesKARUn01G0153290.1">
    <property type="protein sequence ID" value="cds.TraesKARUn01G0153290.1"/>
    <property type="gene ID" value="TraesKARUn01G0153290"/>
</dbReference>
<dbReference type="EnsemblPlants" id="TraesKARUn01G0153730.1">
    <property type="protein sequence ID" value="cds.TraesKARUn01G0153730.1"/>
    <property type="gene ID" value="TraesKARUn01G0153730"/>
</dbReference>
<dbReference type="EnsemblPlants" id="TraesKARUn01G0153760.1">
    <property type="protein sequence ID" value="cds.TraesKARUn01G0153760.1"/>
    <property type="gene ID" value="TraesKARUn01G0153760"/>
</dbReference>
<dbReference type="EnsemblPlants" id="TraesKARUn01G0154770.1">
    <property type="protein sequence ID" value="cds.TraesKARUn01G0154770.1"/>
    <property type="gene ID" value="TraesKARUn01G0154770"/>
</dbReference>
<dbReference type="EnsemblPlants" id="TraesKARUn01G0157200.1">
    <property type="protein sequence ID" value="cds.TraesKARUn01G0157200.1"/>
    <property type="gene ID" value="TraesKARUn01G0157200"/>
</dbReference>
<dbReference type="EnsemblPlants" id="TraesKARUn01G0163190.1">
    <property type="protein sequence ID" value="cds.TraesKARUn01G0163190.1"/>
    <property type="gene ID" value="TraesKARUn01G0163190"/>
</dbReference>
<dbReference type="EnsemblPlants" id="TraesKARUn01G0163470.1">
    <property type="protein sequence ID" value="cds.TraesKARUn01G0163470.1"/>
    <property type="gene ID" value="TraesKARUn01G0163470"/>
</dbReference>
<dbReference type="EnsemblPlants" id="TraesKARUn01G0163640.1">
    <property type="protein sequence ID" value="cds.TraesKARUn01G0163640.1"/>
    <property type="gene ID" value="TraesKARUn01G0163640"/>
</dbReference>
<dbReference type="EnsemblPlants" id="TraesKARUn01G0163790.1">
    <property type="protein sequence ID" value="cds.TraesKARUn01G0163790.1"/>
    <property type="gene ID" value="TraesKARUn01G0163790"/>
</dbReference>
<dbReference type="EnsemblPlants" id="TraesKARUn01G0164420.1">
    <property type="protein sequence ID" value="cds.TraesKARUn01G0164420.1"/>
    <property type="gene ID" value="TraesKARUn01G0164420"/>
</dbReference>
<dbReference type="EnsemblPlants" id="TraesKARUn01G0165870.1">
    <property type="protein sequence ID" value="cds.TraesKARUn01G0165870.1"/>
    <property type="gene ID" value="TraesKARUn01G0165870"/>
</dbReference>
<dbReference type="EnsemblPlants" id="TraesKARUn01G0170790.1">
    <property type="protein sequence ID" value="cds.TraesKARUn01G0170790.1"/>
    <property type="gene ID" value="TraesKARUn01G0170790"/>
</dbReference>
<dbReference type="EnsemblPlants" id="TraesKARUn01G0177790.1">
    <property type="protein sequence ID" value="cds.TraesKARUn01G0177790.1"/>
    <property type="gene ID" value="TraesKARUn01G0177790"/>
</dbReference>
<dbReference type="EnsemblPlants" id="TraesKARUn01G0178410.1">
    <property type="protein sequence ID" value="cds.TraesKARUn01G0178410.1"/>
    <property type="gene ID" value="TraesKARUn01G0178410"/>
</dbReference>
<dbReference type="EnsemblPlants" id="TraesKARUn01G0179010.1">
    <property type="protein sequence ID" value="cds.TraesKARUn01G0179010.1"/>
    <property type="gene ID" value="TraesKARUn01G0179010"/>
</dbReference>
<dbReference type="EnsemblPlants" id="TraesKARUn01G0181520.1">
    <property type="protein sequence ID" value="cds.TraesKARUn01G0181520.1"/>
    <property type="gene ID" value="TraesKARUn01G0181520"/>
</dbReference>
<dbReference type="EnsemblPlants" id="TraesKARUn01G0181940.1">
    <property type="protein sequence ID" value="cds.TraesKARUn01G0181940.1"/>
    <property type="gene ID" value="TraesKARUn01G0181940"/>
</dbReference>
<dbReference type="EnsemblPlants" id="TraesKARUn01G0184040.1">
    <property type="protein sequence ID" value="cds.TraesKARUn01G0184040.1"/>
    <property type="gene ID" value="TraesKARUn01G0184040"/>
</dbReference>
<dbReference type="EnsemblPlants" id="TraesKARUn01G0185400.1">
    <property type="protein sequence ID" value="cds.TraesKARUn01G0185400.1"/>
    <property type="gene ID" value="TraesKARUn01G0185400"/>
</dbReference>
<dbReference type="EnsemblPlants" id="TraesKARUn01G0186370.1">
    <property type="protein sequence ID" value="cds.TraesKARUn01G0186370.1"/>
    <property type="gene ID" value="TraesKARUn01G0186370"/>
</dbReference>
<dbReference type="EnsemblPlants" id="TraesKARUn01G0187120.1">
    <property type="protein sequence ID" value="cds.TraesKARUn01G0187120.1"/>
    <property type="gene ID" value="TraesKARUn01G0187120"/>
</dbReference>
<dbReference type="EnsemblPlants" id="TraesKARUn01G0187960.1">
    <property type="protein sequence ID" value="cds.TraesKARUn01G0187960.1"/>
    <property type="gene ID" value="TraesKARUn01G0187960"/>
</dbReference>
<dbReference type="EnsemblPlants" id="TraesKARUn01G0191150.1">
    <property type="protein sequence ID" value="cds.TraesKARUn01G0191150.1"/>
    <property type="gene ID" value="TraesKARUn01G0191150"/>
</dbReference>
<dbReference type="EnsemblPlants" id="TraesKARUn01G0191710.1">
    <property type="protein sequence ID" value="cds.TraesKARUn01G0191710.1"/>
    <property type="gene ID" value="TraesKARUn01G0191710"/>
</dbReference>
<dbReference type="EnsemblPlants" id="TraesPARA_EIv1.0_2643470.1">
    <property type="protein sequence ID" value="TraesPARA_EIv1.0_2643470.1.CDS1"/>
    <property type="gene ID" value="TraesPARA_EIv1.0_2643470"/>
</dbReference>
<dbReference type="EnsemblPlants" id="TraesPARA_EIv1.0_2644050.1">
    <property type="protein sequence ID" value="TraesPARA_EIv1.0_2644050.1.CDS1"/>
    <property type="gene ID" value="TraesPARA_EIv1.0_2644050"/>
</dbReference>
<dbReference type="EnsemblPlants" id="TraesPARA_EIv1.0_2645200.1">
    <property type="protein sequence ID" value="TraesPARA_EIv1.0_2645200.1.CDS1"/>
    <property type="gene ID" value="TraesPARA_EIv1.0_2645200"/>
</dbReference>
<dbReference type="EnsemblPlants" id="TraesPARA_EIv1.0_2645330.1">
    <property type="protein sequence ID" value="TraesPARA_EIv1.0_2645330.1.CDS1"/>
    <property type="gene ID" value="TraesPARA_EIv1.0_2645330"/>
</dbReference>
<dbReference type="EnsemblPlants" id="TraesPARA_EIv1.0_2645790.1">
    <property type="protein sequence ID" value="TraesPARA_EIv1.0_2645790.1.CDS1"/>
    <property type="gene ID" value="TraesPARA_EIv1.0_2645790"/>
</dbReference>
<dbReference type="EnsemblPlants" id="TraesPARA_EIv1.0_2645870.1">
    <property type="protein sequence ID" value="TraesPARA_EIv1.0_2645870.1.CDS1"/>
    <property type="gene ID" value="TraesPARA_EIv1.0_2645870"/>
</dbReference>
<dbReference type="EnsemblPlants" id="TraesPARA_EIv1.0_2646560.1">
    <property type="protein sequence ID" value="TraesPARA_EIv1.0_2646560.1.CDS1"/>
    <property type="gene ID" value="TraesPARA_EIv1.0_2646560"/>
</dbReference>
<dbReference type="EnsemblPlants" id="TraesPARA_EIv1.0_2646740.1">
    <property type="protein sequence ID" value="TraesPARA_EIv1.0_2646740.1.CDS1"/>
    <property type="gene ID" value="TraesPARA_EIv1.0_2646740"/>
</dbReference>
<dbReference type="EnsemblPlants" id="TraesPARA_EIv1.0_2646780.1">
    <property type="protein sequence ID" value="TraesPARA_EIv1.0_2646780.1.CDS1"/>
    <property type="gene ID" value="TraesPARA_EIv1.0_2646780"/>
</dbReference>
<dbReference type="EnsemblPlants" id="TraesPARA_EIv1.0_2646920.1">
    <property type="protein sequence ID" value="TraesPARA_EIv1.0_2646920.1.CDS1"/>
    <property type="gene ID" value="TraesPARA_EIv1.0_2646920"/>
</dbReference>
<dbReference type="EnsemblPlants" id="TraesPARA_EIv1.0_2647120.1">
    <property type="protein sequence ID" value="TraesPARA_EIv1.0_2647120.1.CDS1"/>
    <property type="gene ID" value="TraesPARA_EIv1.0_2647120"/>
</dbReference>
<dbReference type="EnsemblPlants" id="TraesPARA_EIv1.0_2647250.1">
    <property type="protein sequence ID" value="TraesPARA_EIv1.0_2647250.1.CDS1"/>
    <property type="gene ID" value="TraesPARA_EIv1.0_2647250"/>
</dbReference>
<dbReference type="EnsemblPlants" id="TraesPARA_EIv1.0_2647370.1">
    <property type="protein sequence ID" value="TraesPARA_EIv1.0_2647370.1.CDS1"/>
    <property type="gene ID" value="TraesPARA_EIv1.0_2647370"/>
</dbReference>
<dbReference type="EnsemblPlants" id="TraesPARA_EIv1.0_2647620.1">
    <property type="protein sequence ID" value="TraesPARA_EIv1.0_2647620.1.CDS1"/>
    <property type="gene ID" value="TraesPARA_EIv1.0_2647620"/>
</dbReference>
<dbReference type="EnsemblPlants" id="TraesPARA_EIv1.0_2647690.1">
    <property type="protein sequence ID" value="TraesPARA_EIv1.0_2647690.1.CDS1"/>
    <property type="gene ID" value="TraesPARA_EIv1.0_2647690"/>
</dbReference>
<dbReference type="EnsemblPlants" id="TraesPARA_EIv1.0_2647780.1">
    <property type="protein sequence ID" value="TraesPARA_EIv1.0_2647780.1.CDS1"/>
    <property type="gene ID" value="TraesPARA_EIv1.0_2647780"/>
</dbReference>
<dbReference type="EnsemblPlants" id="TraesPARA_EIv1.0_2647870.1">
    <property type="protein sequence ID" value="TraesPARA_EIv1.0_2647870.1.CDS1"/>
    <property type="gene ID" value="TraesPARA_EIv1.0_2647870"/>
</dbReference>
<dbReference type="EnsemblPlants" id="TraesPARA_EIv1.0_2647970.1">
    <property type="protein sequence ID" value="TraesPARA_EIv1.0_2647970.1.CDS1"/>
    <property type="gene ID" value="TraesPARA_EIv1.0_2647970"/>
</dbReference>
<dbReference type="EnsemblPlants" id="TraesPARA_EIv1.0_2648250.1">
    <property type="protein sequence ID" value="TraesPARA_EIv1.0_2648250.1.CDS1"/>
    <property type="gene ID" value="TraesPARA_EIv1.0_2648250"/>
</dbReference>
<dbReference type="EnsemblPlants" id="TraesPARA_EIv1.0_2648290.1">
    <property type="protein sequence ID" value="TraesPARA_EIv1.0_2648290.1.CDS1"/>
    <property type="gene ID" value="TraesPARA_EIv1.0_2648290"/>
</dbReference>
<dbReference type="EnsemblPlants" id="TraesPARA_EIv1.0_2648480.1">
    <property type="protein sequence ID" value="TraesPARA_EIv1.0_2648480.1.CDS1"/>
    <property type="gene ID" value="TraesPARA_EIv1.0_2648480"/>
</dbReference>
<dbReference type="EnsemblPlants" id="TraesPARA_EIv1.0_2648740.1">
    <property type="protein sequence ID" value="TraesPARA_EIv1.0_2648740.1.CDS1"/>
    <property type="gene ID" value="TraesPARA_EIv1.0_2648740"/>
</dbReference>
<dbReference type="EnsemblPlants" id="TraesPARA_EIv1.0_2649320.1">
    <property type="protein sequence ID" value="TraesPARA_EIv1.0_2649320.1.CDS1"/>
    <property type="gene ID" value="TraesPARA_EIv1.0_2649320"/>
</dbReference>
<dbReference type="EnsemblPlants" id="TraesPARA_EIv1.0_2649620.1">
    <property type="protein sequence ID" value="TraesPARA_EIv1.0_2649620.1.CDS1"/>
    <property type="gene ID" value="TraesPARA_EIv1.0_2649620"/>
</dbReference>
<dbReference type="EnsemblPlants" id="TraesPARA_EIv1.0_2649750.1">
    <property type="protein sequence ID" value="TraesPARA_EIv1.0_2649750.1.CDS1"/>
    <property type="gene ID" value="TraesPARA_EIv1.0_2649750"/>
</dbReference>
<dbReference type="EnsemblPlants" id="TraesPARA_EIv1.0_2650290.1">
    <property type="protein sequence ID" value="TraesPARA_EIv1.0_2650290.1.CDS1"/>
    <property type="gene ID" value="TraesPARA_EIv1.0_2650290"/>
</dbReference>
<dbReference type="EnsemblPlants" id="TraesPARA_EIv1.0_2650510.1">
    <property type="protein sequence ID" value="TraesPARA_EIv1.0_2650510.1.CDS1"/>
    <property type="gene ID" value="TraesPARA_EIv1.0_2650510"/>
</dbReference>
<dbReference type="EnsemblPlants" id="TraesPARA_EIv1.0_2650560.1">
    <property type="protein sequence ID" value="TraesPARA_EIv1.0_2650560.1.CDS1"/>
    <property type="gene ID" value="TraesPARA_EIv1.0_2650560"/>
</dbReference>
<dbReference type="EnsemblPlants" id="TraesPARA_EIv1.0_2650710.1">
    <property type="protein sequence ID" value="TraesPARA_EIv1.0_2650710.1.CDS1"/>
    <property type="gene ID" value="TraesPARA_EIv1.0_2650710"/>
</dbReference>
<dbReference type="EnsemblPlants" id="TraesPARA_EIv1.0_2651200.1">
    <property type="protein sequence ID" value="TraesPARA_EIv1.0_2651200.1.CDS1"/>
    <property type="gene ID" value="TraesPARA_EIv1.0_2651200"/>
</dbReference>
<dbReference type="EnsemblPlants" id="TraesPARA_EIv1.0_2651940.1">
    <property type="protein sequence ID" value="TraesPARA_EIv1.0_2651940.1.CDS1"/>
    <property type="gene ID" value="TraesPARA_EIv1.0_2651940"/>
</dbReference>
<dbReference type="EnsemblPlants" id="TraesPARA_EIv1.0_2652040.1">
    <property type="protein sequence ID" value="TraesPARA_EIv1.0_2652040.1.CDS1"/>
    <property type="gene ID" value="TraesPARA_EIv1.0_2652040"/>
</dbReference>
<dbReference type="EnsemblPlants" id="TraesPARA_EIv1.0_2652620.1">
    <property type="protein sequence ID" value="TraesPARA_EIv1.0_2652620.1.CDS1"/>
    <property type="gene ID" value="TraesPARA_EIv1.0_2652620"/>
</dbReference>
<dbReference type="EnsemblPlants" id="TraesPARA_EIv1.0_2652810.1">
    <property type="protein sequence ID" value="TraesPARA_EIv1.0_2652810.1.CDS1"/>
    <property type="gene ID" value="TraesPARA_EIv1.0_2652810"/>
</dbReference>
<dbReference type="EnsemblPlants" id="TraesPARA_EIv1.0_2652960.1">
    <property type="protein sequence ID" value="TraesPARA_EIv1.0_2652960.1.CDS1"/>
    <property type="gene ID" value="TraesPARA_EIv1.0_2652960"/>
</dbReference>
<dbReference type="EnsemblPlants" id="TraesPARA_EIv1.0_2653790.1">
    <property type="protein sequence ID" value="TraesPARA_EIv1.0_2653790.1.CDS1"/>
    <property type="gene ID" value="TraesPARA_EIv1.0_2653790"/>
</dbReference>
<dbReference type="EnsemblPlants" id="TraesPARA_EIv1.0_2654180.1">
    <property type="protein sequence ID" value="TraesPARA_EIv1.0_2654180.1.CDS1"/>
    <property type="gene ID" value="TraesPARA_EIv1.0_2654180"/>
</dbReference>
<dbReference type="EnsemblPlants" id="TraesPARA_EIv1.0_2654350.1">
    <property type="protein sequence ID" value="TraesPARA_EIv1.0_2654350.1.CDS1"/>
    <property type="gene ID" value="TraesPARA_EIv1.0_2654350"/>
</dbReference>
<dbReference type="EnsemblPlants" id="TraesPARA_EIv1.0_2654490.1">
    <property type="protein sequence ID" value="TraesPARA_EIv1.0_2654490.1.CDS1"/>
    <property type="gene ID" value="TraesPARA_EIv1.0_2654490"/>
</dbReference>
<dbReference type="EnsemblPlants" id="TraesPARA_EIv1.0_2654630.1">
    <property type="protein sequence ID" value="TraesPARA_EIv1.0_2654630.1.CDS1"/>
    <property type="gene ID" value="TraesPARA_EIv1.0_2654630"/>
</dbReference>
<dbReference type="EnsemblPlants" id="TraesPARA_EIv1.0_2655050.1">
    <property type="protein sequence ID" value="TraesPARA_EIv1.0_2655050.1.CDS1"/>
    <property type="gene ID" value="TraesPARA_EIv1.0_2655050"/>
</dbReference>
<dbReference type="EnsemblPlants" id="TraesPARA_EIv1.0_2655210.1">
    <property type="protein sequence ID" value="TraesPARA_EIv1.0_2655210.1.CDS1"/>
    <property type="gene ID" value="TraesPARA_EIv1.0_2655210"/>
</dbReference>
<dbReference type="EnsemblPlants" id="TraesPARA_EIv1.0_2655380.1">
    <property type="protein sequence ID" value="TraesPARA_EIv1.0_2655380.1.CDS1"/>
    <property type="gene ID" value="TraesPARA_EIv1.0_2655380"/>
</dbReference>
<dbReference type="EnsemblPlants" id="TraesPARA_EIv1.0_2655690.1">
    <property type="protein sequence ID" value="TraesPARA_EIv1.0_2655690.1.CDS1"/>
    <property type="gene ID" value="TraesPARA_EIv1.0_2655690"/>
</dbReference>
<dbReference type="EnsemblPlants" id="TraesPARA_EIv1.0_2656160.1">
    <property type="protein sequence ID" value="TraesPARA_EIv1.0_2656160.1.CDS1"/>
    <property type="gene ID" value="TraesPARA_EIv1.0_2656160"/>
</dbReference>
<dbReference type="EnsemblPlants" id="TraesPARA_EIv1.0_2656350.1">
    <property type="protein sequence ID" value="TraesPARA_EIv1.0_2656350.1.CDS1"/>
    <property type="gene ID" value="TraesPARA_EIv1.0_2656350"/>
</dbReference>
<dbReference type="EnsemblPlants" id="TraesPARA_EIv1.0_2656940.1">
    <property type="protein sequence ID" value="TraesPARA_EIv1.0_2656940.1.CDS1"/>
    <property type="gene ID" value="TraesPARA_EIv1.0_2656940"/>
</dbReference>
<dbReference type="EnsemblPlants" id="TraesPARA_EIv1.0_2656990.1">
    <property type="protein sequence ID" value="TraesPARA_EIv1.0_2656990.1.CDS1"/>
    <property type="gene ID" value="TraesPARA_EIv1.0_2656990"/>
</dbReference>
<dbReference type="EnsemblPlants" id="TraesPARA_EIv1.0_2657090.1">
    <property type="protein sequence ID" value="TraesPARA_EIv1.0_2657090.1.CDS1"/>
    <property type="gene ID" value="TraesPARA_EIv1.0_2657090"/>
</dbReference>
<dbReference type="EnsemblPlants" id="TraesPARA_EIv1.0_2658440.1">
    <property type="protein sequence ID" value="TraesPARA_EIv1.0_2658440.1.CDS1"/>
    <property type="gene ID" value="TraesPARA_EIv1.0_2658440"/>
</dbReference>
<dbReference type="EnsemblPlants" id="TraesPARA_EIv1.0_2659950.1">
    <property type="protein sequence ID" value="TraesPARA_EIv1.0_2659950.1.CDS1"/>
    <property type="gene ID" value="TraesPARA_EIv1.0_2659950"/>
</dbReference>
<dbReference type="EnsemblPlants" id="TraesPARA_EIv1.0_2660380.1">
    <property type="protein sequence ID" value="TraesPARA_EIv1.0_2660380.1.CDS1"/>
    <property type="gene ID" value="TraesPARA_EIv1.0_2660380"/>
</dbReference>
<dbReference type="EnsemblPlants" id="TraesPARA_EIv1.0_2662970.1">
    <property type="protein sequence ID" value="TraesPARA_EIv1.0_2662970.1.CDS1"/>
    <property type="gene ID" value="TraesPARA_EIv1.0_2662970"/>
</dbReference>
<dbReference type="EnsemblPlants" id="TraesPARA_EIv1.0_2663380.1">
    <property type="protein sequence ID" value="TraesPARA_EIv1.0_2663380.1.CDS1"/>
    <property type="gene ID" value="TraesPARA_EIv1.0_2663380"/>
</dbReference>
<dbReference type="EnsemblPlants" id="TraesPARA_EIv1.0_2663830.1">
    <property type="protein sequence ID" value="TraesPARA_EIv1.0_2663830.1.CDS1"/>
    <property type="gene ID" value="TraesPARA_EIv1.0_2663830"/>
</dbReference>
<dbReference type="EnsemblPlants" id="TraesPARA_EIv1.0_2665530.1">
    <property type="protein sequence ID" value="TraesPARA_EIv1.0_2665530.1.CDS1"/>
    <property type="gene ID" value="TraesPARA_EIv1.0_2665530"/>
</dbReference>
<dbReference type="EnsemblPlants" id="TraesPARA_EIv1.0_2665670.1">
    <property type="protein sequence ID" value="TraesPARA_EIv1.0_2665670.1.CDS1"/>
    <property type="gene ID" value="TraesPARA_EIv1.0_2665670"/>
</dbReference>
<dbReference type="EnsemblPlants" id="TraesPARA_EIv1.0_2666120.1">
    <property type="protein sequence ID" value="TraesPARA_EIv1.0_2666120.1.CDS1"/>
    <property type="gene ID" value="TraesPARA_EIv1.0_2666120"/>
</dbReference>
<dbReference type="EnsemblPlants" id="TraesPARA_EIv1.0_2666180.1">
    <property type="protein sequence ID" value="TraesPARA_EIv1.0_2666180.1.CDS1"/>
    <property type="gene ID" value="TraesPARA_EIv1.0_2666180"/>
</dbReference>
<dbReference type="EnsemblPlants" id="TraesPARA_EIv1.0_2666700.1">
    <property type="protein sequence ID" value="TraesPARA_EIv1.0_2666700.1.CDS1"/>
    <property type="gene ID" value="TraesPARA_EIv1.0_2666700"/>
</dbReference>
<dbReference type="EnsemblPlants" id="TraesPARA_EIv1.0_2666790.1">
    <property type="protein sequence ID" value="TraesPARA_EIv1.0_2666790.1.CDS1"/>
    <property type="gene ID" value="TraesPARA_EIv1.0_2666790"/>
</dbReference>
<dbReference type="EnsemblPlants" id="TraesPARA_EIv1.0_2667110.1">
    <property type="protein sequence ID" value="TraesPARA_EIv1.0_2667110.1.CDS1"/>
    <property type="gene ID" value="TraesPARA_EIv1.0_2667110"/>
</dbReference>
<dbReference type="EnsemblPlants" id="TraesPARA_EIv1.0_2667840.1">
    <property type="protein sequence ID" value="TraesPARA_EIv1.0_2667840.1.CDS1"/>
    <property type="gene ID" value="TraesPARA_EIv1.0_2667840"/>
</dbReference>
<dbReference type="EnsemblPlants" id="TraesPARA_EIv1.0_2668320.1">
    <property type="protein sequence ID" value="TraesPARA_EIv1.0_2668320.1.CDS1"/>
    <property type="gene ID" value="TraesPARA_EIv1.0_2668320"/>
</dbReference>
<dbReference type="EnsemblPlants" id="TraesPARA_EIv1.0_2668450.1">
    <property type="protein sequence ID" value="TraesPARA_EIv1.0_2668450.1.CDS1"/>
    <property type="gene ID" value="TraesPARA_EIv1.0_2668450"/>
</dbReference>
<dbReference type="EnsemblPlants" id="TraesPARA_EIv1.0_2668840.1">
    <property type="protein sequence ID" value="TraesPARA_EIv1.0_2668840.1.CDS1"/>
    <property type="gene ID" value="TraesPARA_EIv1.0_2668840"/>
</dbReference>
<dbReference type="EnsemblPlants" id="TraesPARA_EIv1.0_2669350.1">
    <property type="protein sequence ID" value="TraesPARA_EIv1.0_2669350.1.CDS1"/>
    <property type="gene ID" value="TraesPARA_EIv1.0_2669350"/>
</dbReference>
<dbReference type="EnsemblPlants" id="TraesPARA_EIv1.0_2669650.1">
    <property type="protein sequence ID" value="TraesPARA_EIv1.0_2669650.1.CDS1"/>
    <property type="gene ID" value="TraesPARA_EIv1.0_2669650"/>
</dbReference>
<dbReference type="EnsemblPlants" id="TraesPARA_EIv1.0_2670020.1">
    <property type="protein sequence ID" value="TraesPARA_EIv1.0_2670020.1.CDS1"/>
    <property type="gene ID" value="TraesPARA_EIv1.0_2670020"/>
</dbReference>
<dbReference type="EnsemblPlants" id="TraesPARA_EIv1.0_2670150.1">
    <property type="protein sequence ID" value="TraesPARA_EIv1.0_2670150.1.CDS1"/>
    <property type="gene ID" value="TraesPARA_EIv1.0_2670150"/>
</dbReference>
<dbReference type="EnsemblPlants" id="TraesPARA_EIv1.0_2671420.1">
    <property type="protein sequence ID" value="TraesPARA_EIv1.0_2671420.1.CDS1"/>
    <property type="gene ID" value="TraesPARA_EIv1.0_2671420"/>
</dbReference>
<dbReference type="EnsemblPlants" id="TraesPARA_EIv1.0_2672650.1">
    <property type="protein sequence ID" value="TraesPARA_EIv1.0_2672650.1.CDS1"/>
    <property type="gene ID" value="TraesPARA_EIv1.0_2672650"/>
</dbReference>
<dbReference type="EnsemblPlants" id="TraesPARA_EIv1.0_2674250.1">
    <property type="protein sequence ID" value="TraesPARA_EIv1.0_2674250.1.CDS1"/>
    <property type="gene ID" value="TraesPARA_EIv1.0_2674250"/>
</dbReference>
<dbReference type="EnsemblPlants" id="TraesPARA_EIv1.0_2679850.1">
    <property type="protein sequence ID" value="TraesPARA_EIv1.0_2679850.1.CDS1"/>
    <property type="gene ID" value="TraesPARA_EIv1.0_2679850"/>
</dbReference>
<dbReference type="EnsemblPlants" id="TraesPARA_EIv1.0_2680220.1">
    <property type="protein sequence ID" value="TraesPARA_EIv1.0_2680220.1.CDS1"/>
    <property type="gene ID" value="TraesPARA_EIv1.0_2680220"/>
</dbReference>
<dbReference type="EnsemblPlants" id="TraesPARA_EIv1.0_2680810.1">
    <property type="protein sequence ID" value="TraesPARA_EIv1.0_2680810.1.CDS1"/>
    <property type="gene ID" value="TraesPARA_EIv1.0_2680810"/>
</dbReference>
<dbReference type="EnsemblPlants" id="TraesPARA_EIv1.0_2681110.1">
    <property type="protein sequence ID" value="TraesPARA_EIv1.0_2681110.1.CDS1"/>
    <property type="gene ID" value="TraesPARA_EIv1.0_2681110"/>
</dbReference>
<dbReference type="EnsemblPlants" id="TraesPARA_EIv1.0_2681430.1">
    <property type="protein sequence ID" value="TraesPARA_EIv1.0_2681430.1.CDS1"/>
    <property type="gene ID" value="TraesPARA_EIv1.0_2681430"/>
</dbReference>
<dbReference type="GeneID" id="803181"/>
<dbReference type="Gramene" id="TraesKAR6B01G0219390.1">
    <property type="protein sequence ID" value="cds.TraesKAR6B01G0219390.1"/>
    <property type="gene ID" value="TraesKAR6B01G0219390"/>
</dbReference>
<dbReference type="Gramene" id="TraesKARUn01G0026010.1">
    <property type="protein sequence ID" value="cds.TraesKARUn01G0026010.1"/>
    <property type="gene ID" value="TraesKARUn01G0026010"/>
</dbReference>
<dbReference type="Gramene" id="TraesKARUn01G0032630.1">
    <property type="protein sequence ID" value="cds.TraesKARUn01G0032630.1"/>
    <property type="gene ID" value="TraesKARUn01G0032630"/>
</dbReference>
<dbReference type="Gramene" id="TraesKARUn01G0033170.1">
    <property type="protein sequence ID" value="cds.TraesKARUn01G0033170.1"/>
    <property type="gene ID" value="TraesKARUn01G0033170"/>
</dbReference>
<dbReference type="Gramene" id="TraesKARUn01G0033430.1">
    <property type="protein sequence ID" value="cds.TraesKARUn01G0033430.1"/>
    <property type="gene ID" value="TraesKARUn01G0033430"/>
</dbReference>
<dbReference type="Gramene" id="TraesKARUn01G0033640.1">
    <property type="protein sequence ID" value="cds.TraesKARUn01G0033640.1"/>
    <property type="gene ID" value="TraesKARUn01G0033640"/>
</dbReference>
<dbReference type="Gramene" id="TraesKARUn01G0033700.1">
    <property type="protein sequence ID" value="cds.TraesKARUn01G0033700.1"/>
    <property type="gene ID" value="TraesKARUn01G0033700"/>
</dbReference>
<dbReference type="Gramene" id="TraesKARUn01G0034740.1">
    <property type="protein sequence ID" value="cds.TraesKARUn01G0034740.1"/>
    <property type="gene ID" value="TraesKARUn01G0034740"/>
</dbReference>
<dbReference type="Gramene" id="TraesKARUn01G0036760.1">
    <property type="protein sequence ID" value="cds.TraesKARUn01G0036760.1"/>
    <property type="gene ID" value="TraesKARUn01G0036760"/>
</dbReference>
<dbReference type="Gramene" id="TraesKARUn01G0037040.1">
    <property type="protein sequence ID" value="cds.TraesKARUn01G0037040.1"/>
    <property type="gene ID" value="TraesKARUn01G0037040"/>
</dbReference>
<dbReference type="Gramene" id="TraesKARUn01G0060580.1">
    <property type="protein sequence ID" value="cds.TraesKARUn01G0060580.1"/>
    <property type="gene ID" value="TraesKARUn01G0060580"/>
</dbReference>
<dbReference type="Gramene" id="TraesKARUn01G0061190.1">
    <property type="protein sequence ID" value="cds.TraesKARUn01G0061190.1"/>
    <property type="gene ID" value="TraesKARUn01G0061190"/>
</dbReference>
<dbReference type="Gramene" id="TraesKARUn01G0062400.1">
    <property type="protein sequence ID" value="cds.TraesKARUn01G0062400.1"/>
    <property type="gene ID" value="TraesKARUn01G0062400"/>
</dbReference>
<dbReference type="Gramene" id="TraesKARUn01G0065200.1">
    <property type="protein sequence ID" value="cds.TraesKARUn01G0065200.1"/>
    <property type="gene ID" value="TraesKARUn01G0065200"/>
</dbReference>
<dbReference type="Gramene" id="TraesKARUn01G0065380.1">
    <property type="protein sequence ID" value="cds.TraesKARUn01G0065380.1"/>
    <property type="gene ID" value="TraesKARUn01G0065380"/>
</dbReference>
<dbReference type="Gramene" id="TraesKARUn01G0066380.1">
    <property type="protein sequence ID" value="cds.TraesKARUn01G0066380.1"/>
    <property type="gene ID" value="TraesKARUn01G0066380"/>
</dbReference>
<dbReference type="Gramene" id="TraesKARUn01G0066660.1">
    <property type="protein sequence ID" value="cds.TraesKARUn01G0066660.1"/>
    <property type="gene ID" value="TraesKARUn01G0066660"/>
</dbReference>
<dbReference type="Gramene" id="TraesKARUn01G0067460.1">
    <property type="protein sequence ID" value="cds.TraesKARUn01G0067460.1"/>
    <property type="gene ID" value="TraesKARUn01G0067460"/>
</dbReference>
<dbReference type="Gramene" id="TraesKARUn01G0070120.1">
    <property type="protein sequence ID" value="cds.TraesKARUn01G0070120.1"/>
    <property type="gene ID" value="TraesKARUn01G0070120"/>
</dbReference>
<dbReference type="Gramene" id="TraesKARUn01G0071150.1">
    <property type="protein sequence ID" value="cds.TraesKARUn01G0071150.1"/>
    <property type="gene ID" value="TraesKARUn01G0071150"/>
</dbReference>
<dbReference type="Gramene" id="TraesKARUn01G0071370.1">
    <property type="protein sequence ID" value="cds.TraesKARUn01G0071370.1"/>
    <property type="gene ID" value="TraesKARUn01G0071370"/>
</dbReference>
<dbReference type="Gramene" id="TraesKARUn01G0072360.1">
    <property type="protein sequence ID" value="cds.TraesKARUn01G0072360.1"/>
    <property type="gene ID" value="TraesKARUn01G0072360"/>
</dbReference>
<dbReference type="Gramene" id="TraesKARUn01G0074910.1">
    <property type="protein sequence ID" value="cds.TraesKARUn01G0074910.1"/>
    <property type="gene ID" value="TraesKARUn01G0074910"/>
</dbReference>
<dbReference type="Gramene" id="TraesKARUn01G0075100.1">
    <property type="protein sequence ID" value="cds.TraesKARUn01G0075100.1"/>
    <property type="gene ID" value="TraesKARUn01G0075100"/>
</dbReference>
<dbReference type="Gramene" id="TraesKARUn01G0076330.1">
    <property type="protein sequence ID" value="cds.TraesKARUn01G0076330.1"/>
    <property type="gene ID" value="TraesKARUn01G0076330"/>
</dbReference>
<dbReference type="Gramene" id="TraesKARUn01G0076500.1">
    <property type="protein sequence ID" value="cds.TraesKARUn01G0076500.1"/>
    <property type="gene ID" value="TraesKARUn01G0076500"/>
</dbReference>
<dbReference type="Gramene" id="TraesKARUn01G0076550.1">
    <property type="protein sequence ID" value="cds.TraesKARUn01G0076550.1"/>
    <property type="gene ID" value="TraesKARUn01G0076550"/>
</dbReference>
<dbReference type="Gramene" id="TraesKARUn01G0079210.1">
    <property type="protein sequence ID" value="cds.TraesKARUn01G0079210.1"/>
    <property type="gene ID" value="TraesKARUn01G0079210"/>
</dbReference>
<dbReference type="Gramene" id="TraesKARUn01G0080630.1">
    <property type="protein sequence ID" value="cds.TraesKARUn01G0080630.1"/>
    <property type="gene ID" value="TraesKARUn01G0080630"/>
</dbReference>
<dbReference type="Gramene" id="TraesKARUn01G0081770.1">
    <property type="protein sequence ID" value="cds.TraesKARUn01G0081770.1"/>
    <property type="gene ID" value="TraesKARUn01G0081770"/>
</dbReference>
<dbReference type="Gramene" id="TraesKARUn01G0084650.1">
    <property type="protein sequence ID" value="cds.TraesKARUn01G0084650.1"/>
    <property type="gene ID" value="TraesKARUn01G0084650"/>
</dbReference>
<dbReference type="Gramene" id="TraesKARUn01G0086360.1">
    <property type="protein sequence ID" value="cds.TraesKARUn01G0086360.1"/>
    <property type="gene ID" value="TraesKARUn01G0086360"/>
</dbReference>
<dbReference type="Gramene" id="TraesKARUn01G0086740.1">
    <property type="protein sequence ID" value="cds.TraesKARUn01G0086740.1"/>
    <property type="gene ID" value="TraesKARUn01G0086740"/>
</dbReference>
<dbReference type="Gramene" id="TraesKARUn01G0087220.1">
    <property type="protein sequence ID" value="cds.TraesKARUn01G0087220.1"/>
    <property type="gene ID" value="TraesKARUn01G0087220"/>
</dbReference>
<dbReference type="Gramene" id="TraesKARUn01G0087720.1">
    <property type="protein sequence ID" value="cds.TraesKARUn01G0087720.1"/>
    <property type="gene ID" value="TraesKARUn01G0087720"/>
</dbReference>
<dbReference type="Gramene" id="TraesKARUn01G0088070.1">
    <property type="protein sequence ID" value="cds.TraesKARUn01G0088070.1"/>
    <property type="gene ID" value="TraesKARUn01G0088070"/>
</dbReference>
<dbReference type="Gramene" id="TraesKARUn01G0088200.1">
    <property type="protein sequence ID" value="cds.TraesKARUn01G0088200.1"/>
    <property type="gene ID" value="TraesKARUn01G0088200"/>
</dbReference>
<dbReference type="Gramene" id="TraesKARUn01G0089130.1">
    <property type="protein sequence ID" value="cds.TraesKARUn01G0089130.1"/>
    <property type="gene ID" value="TraesKARUn01G0089130"/>
</dbReference>
<dbReference type="Gramene" id="TraesKARUn01G0089680.1">
    <property type="protein sequence ID" value="cds.TraesKARUn01G0089680.1"/>
    <property type="gene ID" value="TraesKARUn01G0089680"/>
</dbReference>
<dbReference type="Gramene" id="TraesKARUn01G0091130.1">
    <property type="protein sequence ID" value="cds.TraesKARUn01G0091130.1"/>
    <property type="gene ID" value="TraesKARUn01G0091130"/>
</dbReference>
<dbReference type="Gramene" id="TraesKARUn01G0100700.1">
    <property type="protein sequence ID" value="cds.TraesKARUn01G0100700.1"/>
    <property type="gene ID" value="TraesKARUn01G0100700"/>
</dbReference>
<dbReference type="Gramene" id="TraesKARUn01G0101010.1">
    <property type="protein sequence ID" value="cds.TraesKARUn01G0101010.1"/>
    <property type="gene ID" value="TraesKARUn01G0101010"/>
</dbReference>
<dbReference type="Gramene" id="TraesKARUn01G0101470.1">
    <property type="protein sequence ID" value="cds.TraesKARUn01G0101470.1"/>
    <property type="gene ID" value="TraesKARUn01G0101470"/>
</dbReference>
<dbReference type="Gramene" id="TraesKARUn01G0101920.1">
    <property type="protein sequence ID" value="cds.TraesKARUn01G0101920.1"/>
    <property type="gene ID" value="TraesKARUn01G0101920"/>
</dbReference>
<dbReference type="Gramene" id="TraesKARUn01G0105040.1">
    <property type="protein sequence ID" value="cds.TraesKARUn01G0105040.1"/>
    <property type="gene ID" value="TraesKARUn01G0105040"/>
</dbReference>
<dbReference type="Gramene" id="TraesKARUn01G0106250.1">
    <property type="protein sequence ID" value="cds.TraesKARUn01G0106250.1"/>
    <property type="gene ID" value="TraesKARUn01G0106250"/>
</dbReference>
<dbReference type="Gramene" id="TraesKARUn01G0106650.1">
    <property type="protein sequence ID" value="cds.TraesKARUn01G0106650.1"/>
    <property type="gene ID" value="TraesKARUn01G0106650"/>
</dbReference>
<dbReference type="Gramene" id="TraesKARUn01G0108290.1">
    <property type="protein sequence ID" value="cds.TraesKARUn01G0108290.1"/>
    <property type="gene ID" value="TraesKARUn01G0108290"/>
</dbReference>
<dbReference type="Gramene" id="TraesKARUn01G0113330.1">
    <property type="protein sequence ID" value="cds.TraesKARUn01G0113330.1"/>
    <property type="gene ID" value="TraesKARUn01G0113330"/>
</dbReference>
<dbReference type="Gramene" id="TraesKARUn01G0113700.1">
    <property type="protein sequence ID" value="cds.TraesKARUn01G0113700.1"/>
    <property type="gene ID" value="TraesKARUn01G0113700"/>
</dbReference>
<dbReference type="Gramene" id="TraesKARUn01G0116470.1">
    <property type="protein sequence ID" value="cds.TraesKARUn01G0116470.1"/>
    <property type="gene ID" value="TraesKARUn01G0116470"/>
</dbReference>
<dbReference type="Gramene" id="TraesKARUn01G0122840.1">
    <property type="protein sequence ID" value="cds.TraesKARUn01G0122840.1"/>
    <property type="gene ID" value="TraesKARUn01G0122840"/>
</dbReference>
<dbReference type="Gramene" id="TraesKARUn01G0123940.1">
    <property type="protein sequence ID" value="cds.TraesKARUn01G0123940.1"/>
    <property type="gene ID" value="TraesKARUn01G0123940"/>
</dbReference>
<dbReference type="Gramene" id="TraesKARUn01G0124340.1">
    <property type="protein sequence ID" value="cds.TraesKARUn01G0124340.1"/>
    <property type="gene ID" value="TraesKARUn01G0124340"/>
</dbReference>
<dbReference type="Gramene" id="TraesKARUn01G0124370.1">
    <property type="protein sequence ID" value="cds.TraesKARUn01G0124370.1"/>
    <property type="gene ID" value="TraesKARUn01G0124370"/>
</dbReference>
<dbReference type="Gramene" id="TraesKARUn01G0124510.1">
    <property type="protein sequence ID" value="cds.TraesKARUn01G0124510.1"/>
    <property type="gene ID" value="TraesKARUn01G0124510"/>
</dbReference>
<dbReference type="Gramene" id="TraesKARUn01G0125600.1">
    <property type="protein sequence ID" value="cds.TraesKARUn01G0125600.1"/>
    <property type="gene ID" value="TraesKARUn01G0125600"/>
</dbReference>
<dbReference type="Gramene" id="TraesKARUn01G0127400.1">
    <property type="protein sequence ID" value="cds.TraesKARUn01G0127400.1"/>
    <property type="gene ID" value="TraesKARUn01G0127400"/>
</dbReference>
<dbReference type="Gramene" id="TraesKARUn01G0127680.1">
    <property type="protein sequence ID" value="cds.TraesKARUn01G0127680.1"/>
    <property type="gene ID" value="TraesKARUn01G0127680"/>
</dbReference>
<dbReference type="Gramene" id="TraesKARUn01G0132640.1">
    <property type="protein sequence ID" value="cds.TraesKARUn01G0132640.1"/>
    <property type="gene ID" value="TraesKARUn01G0132640"/>
</dbReference>
<dbReference type="Gramene" id="TraesKARUn01G0136200.1">
    <property type="protein sequence ID" value="cds.TraesKARUn01G0136200.1"/>
    <property type="gene ID" value="TraesKARUn01G0136200"/>
</dbReference>
<dbReference type="Gramene" id="TraesKARUn01G0137250.1">
    <property type="protein sequence ID" value="cds.TraesKARUn01G0137250.1"/>
    <property type="gene ID" value="TraesKARUn01G0137250"/>
</dbReference>
<dbReference type="Gramene" id="TraesKARUn01G0137540.1">
    <property type="protein sequence ID" value="cds.TraesKARUn01G0137540.1"/>
    <property type="gene ID" value="TraesKARUn01G0137540"/>
</dbReference>
<dbReference type="Gramene" id="TraesKARUn01G0137790.1">
    <property type="protein sequence ID" value="cds.TraesKARUn01G0137790.1"/>
    <property type="gene ID" value="TraesKARUn01G0137790"/>
</dbReference>
<dbReference type="Gramene" id="TraesKARUn01G0139580.1">
    <property type="protein sequence ID" value="cds.TraesKARUn01G0139580.1"/>
    <property type="gene ID" value="TraesKARUn01G0139580"/>
</dbReference>
<dbReference type="Gramene" id="TraesKARUn01G0142850.1">
    <property type="protein sequence ID" value="cds.TraesKARUn01G0142850.1"/>
    <property type="gene ID" value="TraesKARUn01G0142850"/>
</dbReference>
<dbReference type="Gramene" id="TraesKARUn01G0143180.1">
    <property type="protein sequence ID" value="cds.TraesKARUn01G0143180.1"/>
    <property type="gene ID" value="TraesKARUn01G0143180"/>
</dbReference>
<dbReference type="Gramene" id="TraesKARUn01G0144770.1">
    <property type="protein sequence ID" value="cds.TraesKARUn01G0144770.1"/>
    <property type="gene ID" value="TraesKARUn01G0144770"/>
</dbReference>
<dbReference type="Gramene" id="TraesKARUn01G0147260.1">
    <property type="protein sequence ID" value="cds.TraesKARUn01G0147260.1"/>
    <property type="gene ID" value="TraesKARUn01G0147260"/>
</dbReference>
<dbReference type="Gramene" id="TraesKARUn01G0147290.1">
    <property type="protein sequence ID" value="cds.TraesKARUn01G0147290.1"/>
    <property type="gene ID" value="TraesKARUn01G0147290"/>
</dbReference>
<dbReference type="Gramene" id="TraesKARUn01G0147600.1">
    <property type="protein sequence ID" value="cds.TraesKARUn01G0147600.1"/>
    <property type="gene ID" value="TraesKARUn01G0147600"/>
</dbReference>
<dbReference type="Gramene" id="TraesKARUn01G0147900.1">
    <property type="protein sequence ID" value="cds.TraesKARUn01G0147900.1"/>
    <property type="gene ID" value="TraesKARUn01G0147900"/>
</dbReference>
<dbReference type="Gramene" id="TraesKARUn01G0148780.1">
    <property type="protein sequence ID" value="cds.TraesKARUn01G0148780.1"/>
    <property type="gene ID" value="TraesKARUn01G0148780"/>
</dbReference>
<dbReference type="Gramene" id="TraesKARUn01G0152080.1">
    <property type="protein sequence ID" value="cds.TraesKARUn01G0152080.1"/>
    <property type="gene ID" value="TraesKARUn01G0152080"/>
</dbReference>
<dbReference type="Gramene" id="TraesKARUn01G0153290.1">
    <property type="protein sequence ID" value="cds.TraesKARUn01G0153290.1"/>
    <property type="gene ID" value="TraesKARUn01G0153290"/>
</dbReference>
<dbReference type="Gramene" id="TraesKARUn01G0153730.1">
    <property type="protein sequence ID" value="cds.TraesKARUn01G0153730.1"/>
    <property type="gene ID" value="TraesKARUn01G0153730"/>
</dbReference>
<dbReference type="Gramene" id="TraesKARUn01G0153760.1">
    <property type="protein sequence ID" value="cds.TraesKARUn01G0153760.1"/>
    <property type="gene ID" value="TraesKARUn01G0153760"/>
</dbReference>
<dbReference type="Gramene" id="TraesKARUn01G0154770.1">
    <property type="protein sequence ID" value="cds.TraesKARUn01G0154770.1"/>
    <property type="gene ID" value="TraesKARUn01G0154770"/>
</dbReference>
<dbReference type="Gramene" id="TraesKARUn01G0157200.1">
    <property type="protein sequence ID" value="cds.TraesKARUn01G0157200.1"/>
    <property type="gene ID" value="TraesKARUn01G0157200"/>
</dbReference>
<dbReference type="Gramene" id="TraesKARUn01G0163190.1">
    <property type="protein sequence ID" value="cds.TraesKARUn01G0163190.1"/>
    <property type="gene ID" value="TraesKARUn01G0163190"/>
</dbReference>
<dbReference type="Gramene" id="TraesKARUn01G0163470.1">
    <property type="protein sequence ID" value="cds.TraesKARUn01G0163470.1"/>
    <property type="gene ID" value="TraesKARUn01G0163470"/>
</dbReference>
<dbReference type="Gramene" id="TraesKARUn01G0163640.1">
    <property type="protein sequence ID" value="cds.TraesKARUn01G0163640.1"/>
    <property type="gene ID" value="TraesKARUn01G0163640"/>
</dbReference>
<dbReference type="Gramene" id="TraesKARUn01G0163790.1">
    <property type="protein sequence ID" value="cds.TraesKARUn01G0163790.1"/>
    <property type="gene ID" value="TraesKARUn01G0163790"/>
</dbReference>
<dbReference type="Gramene" id="TraesKARUn01G0164420.1">
    <property type="protein sequence ID" value="cds.TraesKARUn01G0164420.1"/>
    <property type="gene ID" value="TraesKARUn01G0164420"/>
</dbReference>
<dbReference type="Gramene" id="TraesKARUn01G0165870.1">
    <property type="protein sequence ID" value="cds.TraesKARUn01G0165870.1"/>
    <property type="gene ID" value="TraesKARUn01G0165870"/>
</dbReference>
<dbReference type="Gramene" id="TraesKARUn01G0170790.1">
    <property type="protein sequence ID" value="cds.TraesKARUn01G0170790.1"/>
    <property type="gene ID" value="TraesKARUn01G0170790"/>
</dbReference>
<dbReference type="Gramene" id="TraesKARUn01G0177790.1">
    <property type="protein sequence ID" value="cds.TraesKARUn01G0177790.1"/>
    <property type="gene ID" value="TraesKARUn01G0177790"/>
</dbReference>
<dbReference type="Gramene" id="TraesKARUn01G0178410.1">
    <property type="protein sequence ID" value="cds.TraesKARUn01G0178410.1"/>
    <property type="gene ID" value="TraesKARUn01G0178410"/>
</dbReference>
<dbReference type="Gramene" id="TraesKARUn01G0179010.1">
    <property type="protein sequence ID" value="cds.TraesKARUn01G0179010.1"/>
    <property type="gene ID" value="TraesKARUn01G0179010"/>
</dbReference>
<dbReference type="Gramene" id="TraesKARUn01G0181520.1">
    <property type="protein sequence ID" value="cds.TraesKARUn01G0181520.1"/>
    <property type="gene ID" value="TraesKARUn01G0181520"/>
</dbReference>
<dbReference type="Gramene" id="TraesKARUn01G0181940.1">
    <property type="protein sequence ID" value="cds.TraesKARUn01G0181940.1"/>
    <property type="gene ID" value="TraesKARUn01G0181940"/>
</dbReference>
<dbReference type="Gramene" id="TraesKARUn01G0184040.1">
    <property type="protein sequence ID" value="cds.TraesKARUn01G0184040.1"/>
    <property type="gene ID" value="TraesKARUn01G0184040"/>
</dbReference>
<dbReference type="Gramene" id="TraesKARUn01G0185400.1">
    <property type="protein sequence ID" value="cds.TraesKARUn01G0185400.1"/>
    <property type="gene ID" value="TraesKARUn01G0185400"/>
</dbReference>
<dbReference type="Gramene" id="TraesKARUn01G0186370.1">
    <property type="protein sequence ID" value="cds.TraesKARUn01G0186370.1"/>
    <property type="gene ID" value="TraesKARUn01G0186370"/>
</dbReference>
<dbReference type="Gramene" id="TraesKARUn01G0187120.1">
    <property type="protein sequence ID" value="cds.TraesKARUn01G0187120.1"/>
    <property type="gene ID" value="TraesKARUn01G0187120"/>
</dbReference>
<dbReference type="Gramene" id="TraesKARUn01G0187960.1">
    <property type="protein sequence ID" value="cds.TraesKARUn01G0187960.1"/>
    <property type="gene ID" value="TraesKARUn01G0187960"/>
</dbReference>
<dbReference type="Gramene" id="TraesKARUn01G0191150.1">
    <property type="protein sequence ID" value="cds.TraesKARUn01G0191150.1"/>
    <property type="gene ID" value="TraesKARUn01G0191150"/>
</dbReference>
<dbReference type="Gramene" id="TraesKARUn01G0191710.1">
    <property type="protein sequence ID" value="cds.TraesKARUn01G0191710.1"/>
    <property type="gene ID" value="TraesKARUn01G0191710"/>
</dbReference>
<dbReference type="Gramene" id="TraesPARA_EIv1.0_2643470.1">
    <property type="protein sequence ID" value="TraesPARA_EIv1.0_2643470.1.CDS1"/>
    <property type="gene ID" value="TraesPARA_EIv1.0_2643470"/>
</dbReference>
<dbReference type="Gramene" id="TraesPARA_EIv1.0_2644050.1">
    <property type="protein sequence ID" value="TraesPARA_EIv1.0_2644050.1.CDS1"/>
    <property type="gene ID" value="TraesPARA_EIv1.0_2644050"/>
</dbReference>
<dbReference type="Gramene" id="TraesPARA_EIv1.0_2645200.1">
    <property type="protein sequence ID" value="TraesPARA_EIv1.0_2645200.1.CDS1"/>
    <property type="gene ID" value="TraesPARA_EIv1.0_2645200"/>
</dbReference>
<dbReference type="Gramene" id="TraesPARA_EIv1.0_2645330.1">
    <property type="protein sequence ID" value="TraesPARA_EIv1.0_2645330.1.CDS1"/>
    <property type="gene ID" value="TraesPARA_EIv1.0_2645330"/>
</dbReference>
<dbReference type="Gramene" id="TraesPARA_EIv1.0_2645790.1">
    <property type="protein sequence ID" value="TraesPARA_EIv1.0_2645790.1.CDS1"/>
    <property type="gene ID" value="TraesPARA_EIv1.0_2645790"/>
</dbReference>
<dbReference type="Gramene" id="TraesPARA_EIv1.0_2645870.1">
    <property type="protein sequence ID" value="TraesPARA_EIv1.0_2645870.1.CDS1"/>
    <property type="gene ID" value="TraesPARA_EIv1.0_2645870"/>
</dbReference>
<dbReference type="Gramene" id="TraesPARA_EIv1.0_2646560.1">
    <property type="protein sequence ID" value="TraesPARA_EIv1.0_2646560.1.CDS1"/>
    <property type="gene ID" value="TraesPARA_EIv1.0_2646560"/>
</dbReference>
<dbReference type="Gramene" id="TraesPARA_EIv1.0_2646740.1">
    <property type="protein sequence ID" value="TraesPARA_EIv1.0_2646740.1.CDS1"/>
    <property type="gene ID" value="TraesPARA_EIv1.0_2646740"/>
</dbReference>
<dbReference type="Gramene" id="TraesPARA_EIv1.0_2646780.1">
    <property type="protein sequence ID" value="TraesPARA_EIv1.0_2646780.1.CDS1"/>
    <property type="gene ID" value="TraesPARA_EIv1.0_2646780"/>
</dbReference>
<dbReference type="Gramene" id="TraesPARA_EIv1.0_2646920.1">
    <property type="protein sequence ID" value="TraesPARA_EIv1.0_2646920.1.CDS1"/>
    <property type="gene ID" value="TraesPARA_EIv1.0_2646920"/>
</dbReference>
<dbReference type="Gramene" id="TraesPARA_EIv1.0_2647120.1">
    <property type="protein sequence ID" value="TraesPARA_EIv1.0_2647120.1.CDS1"/>
    <property type="gene ID" value="TraesPARA_EIv1.0_2647120"/>
</dbReference>
<dbReference type="Gramene" id="TraesPARA_EIv1.0_2647250.1">
    <property type="protein sequence ID" value="TraesPARA_EIv1.0_2647250.1.CDS1"/>
    <property type="gene ID" value="TraesPARA_EIv1.0_2647250"/>
</dbReference>
<dbReference type="Gramene" id="TraesPARA_EIv1.0_2647370.1">
    <property type="protein sequence ID" value="TraesPARA_EIv1.0_2647370.1.CDS1"/>
    <property type="gene ID" value="TraesPARA_EIv1.0_2647370"/>
</dbReference>
<dbReference type="Gramene" id="TraesPARA_EIv1.0_2647620.1">
    <property type="protein sequence ID" value="TraesPARA_EIv1.0_2647620.1.CDS1"/>
    <property type="gene ID" value="TraesPARA_EIv1.0_2647620"/>
</dbReference>
<dbReference type="Gramene" id="TraesPARA_EIv1.0_2647690.1">
    <property type="protein sequence ID" value="TraesPARA_EIv1.0_2647690.1.CDS1"/>
    <property type="gene ID" value="TraesPARA_EIv1.0_2647690"/>
</dbReference>
<dbReference type="Gramene" id="TraesPARA_EIv1.0_2647780.1">
    <property type="protein sequence ID" value="TraesPARA_EIv1.0_2647780.1.CDS1"/>
    <property type="gene ID" value="TraesPARA_EIv1.0_2647780"/>
</dbReference>
<dbReference type="Gramene" id="TraesPARA_EIv1.0_2647870.1">
    <property type="protein sequence ID" value="TraesPARA_EIv1.0_2647870.1.CDS1"/>
    <property type="gene ID" value="TraesPARA_EIv1.0_2647870"/>
</dbReference>
<dbReference type="Gramene" id="TraesPARA_EIv1.0_2647970.1">
    <property type="protein sequence ID" value="TraesPARA_EIv1.0_2647970.1.CDS1"/>
    <property type="gene ID" value="TraesPARA_EIv1.0_2647970"/>
</dbReference>
<dbReference type="Gramene" id="TraesPARA_EIv1.0_2648250.1">
    <property type="protein sequence ID" value="TraesPARA_EIv1.0_2648250.1.CDS1"/>
    <property type="gene ID" value="TraesPARA_EIv1.0_2648250"/>
</dbReference>
<dbReference type="Gramene" id="TraesPARA_EIv1.0_2648290.1">
    <property type="protein sequence ID" value="TraesPARA_EIv1.0_2648290.1.CDS1"/>
    <property type="gene ID" value="TraesPARA_EIv1.0_2648290"/>
</dbReference>
<dbReference type="Gramene" id="TraesPARA_EIv1.0_2648480.1">
    <property type="protein sequence ID" value="TraesPARA_EIv1.0_2648480.1.CDS1"/>
    <property type="gene ID" value="TraesPARA_EIv1.0_2648480"/>
</dbReference>
<dbReference type="Gramene" id="TraesPARA_EIv1.0_2648740.1">
    <property type="protein sequence ID" value="TraesPARA_EIv1.0_2648740.1.CDS1"/>
    <property type="gene ID" value="TraesPARA_EIv1.0_2648740"/>
</dbReference>
<dbReference type="Gramene" id="TraesPARA_EIv1.0_2649320.1">
    <property type="protein sequence ID" value="TraesPARA_EIv1.0_2649320.1.CDS1"/>
    <property type="gene ID" value="TraesPARA_EIv1.0_2649320"/>
</dbReference>
<dbReference type="Gramene" id="TraesPARA_EIv1.0_2649620.1">
    <property type="protein sequence ID" value="TraesPARA_EIv1.0_2649620.1.CDS1"/>
    <property type="gene ID" value="TraesPARA_EIv1.0_2649620"/>
</dbReference>
<dbReference type="Gramene" id="TraesPARA_EIv1.0_2649750.1">
    <property type="protein sequence ID" value="TraesPARA_EIv1.0_2649750.1.CDS1"/>
    <property type="gene ID" value="TraesPARA_EIv1.0_2649750"/>
</dbReference>
<dbReference type="Gramene" id="TraesPARA_EIv1.0_2650290.1">
    <property type="protein sequence ID" value="TraesPARA_EIv1.0_2650290.1.CDS1"/>
    <property type="gene ID" value="TraesPARA_EIv1.0_2650290"/>
</dbReference>
<dbReference type="Gramene" id="TraesPARA_EIv1.0_2650510.1">
    <property type="protein sequence ID" value="TraesPARA_EIv1.0_2650510.1.CDS1"/>
    <property type="gene ID" value="TraesPARA_EIv1.0_2650510"/>
</dbReference>
<dbReference type="Gramene" id="TraesPARA_EIv1.0_2650560.1">
    <property type="protein sequence ID" value="TraesPARA_EIv1.0_2650560.1.CDS1"/>
    <property type="gene ID" value="TraesPARA_EIv1.0_2650560"/>
</dbReference>
<dbReference type="Gramene" id="TraesPARA_EIv1.0_2650710.1">
    <property type="protein sequence ID" value="TraesPARA_EIv1.0_2650710.1.CDS1"/>
    <property type="gene ID" value="TraesPARA_EIv1.0_2650710"/>
</dbReference>
<dbReference type="Gramene" id="TraesPARA_EIv1.0_2651200.1">
    <property type="protein sequence ID" value="TraesPARA_EIv1.0_2651200.1.CDS1"/>
    <property type="gene ID" value="TraesPARA_EIv1.0_2651200"/>
</dbReference>
<dbReference type="Gramene" id="TraesPARA_EIv1.0_2651940.1">
    <property type="protein sequence ID" value="TraesPARA_EIv1.0_2651940.1.CDS1"/>
    <property type="gene ID" value="TraesPARA_EIv1.0_2651940"/>
</dbReference>
<dbReference type="Gramene" id="TraesPARA_EIv1.0_2652040.1">
    <property type="protein sequence ID" value="TraesPARA_EIv1.0_2652040.1.CDS1"/>
    <property type="gene ID" value="TraesPARA_EIv1.0_2652040"/>
</dbReference>
<dbReference type="Gramene" id="TraesPARA_EIv1.0_2652620.1">
    <property type="protein sequence ID" value="TraesPARA_EIv1.0_2652620.1.CDS1"/>
    <property type="gene ID" value="TraesPARA_EIv1.0_2652620"/>
</dbReference>
<dbReference type="Gramene" id="TraesPARA_EIv1.0_2652810.1">
    <property type="protein sequence ID" value="TraesPARA_EIv1.0_2652810.1.CDS1"/>
    <property type="gene ID" value="TraesPARA_EIv1.0_2652810"/>
</dbReference>
<dbReference type="Gramene" id="TraesPARA_EIv1.0_2652960.1">
    <property type="protein sequence ID" value="TraesPARA_EIv1.0_2652960.1.CDS1"/>
    <property type="gene ID" value="TraesPARA_EIv1.0_2652960"/>
</dbReference>
<dbReference type="Gramene" id="TraesPARA_EIv1.0_2653790.1">
    <property type="protein sequence ID" value="TraesPARA_EIv1.0_2653790.1.CDS1"/>
    <property type="gene ID" value="TraesPARA_EIv1.0_2653790"/>
</dbReference>
<dbReference type="Gramene" id="TraesPARA_EIv1.0_2654180.1">
    <property type="protein sequence ID" value="TraesPARA_EIv1.0_2654180.1.CDS1"/>
    <property type="gene ID" value="TraesPARA_EIv1.0_2654180"/>
</dbReference>
<dbReference type="Gramene" id="TraesPARA_EIv1.0_2654350.1">
    <property type="protein sequence ID" value="TraesPARA_EIv1.0_2654350.1.CDS1"/>
    <property type="gene ID" value="TraesPARA_EIv1.0_2654350"/>
</dbReference>
<dbReference type="Gramene" id="TraesPARA_EIv1.0_2654490.1">
    <property type="protein sequence ID" value="TraesPARA_EIv1.0_2654490.1.CDS1"/>
    <property type="gene ID" value="TraesPARA_EIv1.0_2654490"/>
</dbReference>
<dbReference type="Gramene" id="TraesPARA_EIv1.0_2654630.1">
    <property type="protein sequence ID" value="TraesPARA_EIv1.0_2654630.1.CDS1"/>
    <property type="gene ID" value="TraesPARA_EIv1.0_2654630"/>
</dbReference>
<dbReference type="Gramene" id="TraesPARA_EIv1.0_2655050.1">
    <property type="protein sequence ID" value="TraesPARA_EIv1.0_2655050.1.CDS1"/>
    <property type="gene ID" value="TraesPARA_EIv1.0_2655050"/>
</dbReference>
<dbReference type="Gramene" id="TraesPARA_EIv1.0_2655210.1">
    <property type="protein sequence ID" value="TraesPARA_EIv1.0_2655210.1.CDS1"/>
    <property type="gene ID" value="TraesPARA_EIv1.0_2655210"/>
</dbReference>
<dbReference type="Gramene" id="TraesPARA_EIv1.0_2655380.1">
    <property type="protein sequence ID" value="TraesPARA_EIv1.0_2655380.1.CDS1"/>
    <property type="gene ID" value="TraesPARA_EIv1.0_2655380"/>
</dbReference>
<dbReference type="Gramene" id="TraesPARA_EIv1.0_2655690.1">
    <property type="protein sequence ID" value="TraesPARA_EIv1.0_2655690.1.CDS1"/>
    <property type="gene ID" value="TraesPARA_EIv1.0_2655690"/>
</dbReference>
<dbReference type="Gramene" id="TraesPARA_EIv1.0_2656160.1">
    <property type="protein sequence ID" value="TraesPARA_EIv1.0_2656160.1.CDS1"/>
    <property type="gene ID" value="TraesPARA_EIv1.0_2656160"/>
</dbReference>
<dbReference type="Gramene" id="TraesPARA_EIv1.0_2656350.1">
    <property type="protein sequence ID" value="TraesPARA_EIv1.0_2656350.1.CDS1"/>
    <property type="gene ID" value="TraesPARA_EIv1.0_2656350"/>
</dbReference>
<dbReference type="Gramene" id="TraesPARA_EIv1.0_2656940.1">
    <property type="protein sequence ID" value="TraesPARA_EIv1.0_2656940.1.CDS1"/>
    <property type="gene ID" value="TraesPARA_EIv1.0_2656940"/>
</dbReference>
<dbReference type="Gramene" id="TraesPARA_EIv1.0_2656990.1">
    <property type="protein sequence ID" value="TraesPARA_EIv1.0_2656990.1.CDS1"/>
    <property type="gene ID" value="TraesPARA_EIv1.0_2656990"/>
</dbReference>
<dbReference type="Gramene" id="TraesPARA_EIv1.0_2657090.1">
    <property type="protein sequence ID" value="TraesPARA_EIv1.0_2657090.1.CDS1"/>
    <property type="gene ID" value="TraesPARA_EIv1.0_2657090"/>
</dbReference>
<dbReference type="Gramene" id="TraesPARA_EIv1.0_2658440.1">
    <property type="protein sequence ID" value="TraesPARA_EIv1.0_2658440.1.CDS1"/>
    <property type="gene ID" value="TraesPARA_EIv1.0_2658440"/>
</dbReference>
<dbReference type="Gramene" id="TraesPARA_EIv1.0_2659950.1">
    <property type="protein sequence ID" value="TraesPARA_EIv1.0_2659950.1.CDS1"/>
    <property type="gene ID" value="TraesPARA_EIv1.0_2659950"/>
</dbReference>
<dbReference type="Gramene" id="TraesPARA_EIv1.0_2660380.1">
    <property type="protein sequence ID" value="TraesPARA_EIv1.0_2660380.1.CDS1"/>
    <property type="gene ID" value="TraesPARA_EIv1.0_2660380"/>
</dbReference>
<dbReference type="Gramene" id="TraesPARA_EIv1.0_2662970.1">
    <property type="protein sequence ID" value="TraesPARA_EIv1.0_2662970.1.CDS1"/>
    <property type="gene ID" value="TraesPARA_EIv1.0_2662970"/>
</dbReference>
<dbReference type="Gramene" id="TraesPARA_EIv1.0_2663380.1">
    <property type="protein sequence ID" value="TraesPARA_EIv1.0_2663380.1.CDS1"/>
    <property type="gene ID" value="TraesPARA_EIv1.0_2663380"/>
</dbReference>
<dbReference type="Gramene" id="TraesPARA_EIv1.0_2663830.1">
    <property type="protein sequence ID" value="TraesPARA_EIv1.0_2663830.1.CDS1"/>
    <property type="gene ID" value="TraesPARA_EIv1.0_2663830"/>
</dbReference>
<dbReference type="Gramene" id="TraesPARA_EIv1.0_2665530.1">
    <property type="protein sequence ID" value="TraesPARA_EIv1.0_2665530.1.CDS1"/>
    <property type="gene ID" value="TraesPARA_EIv1.0_2665530"/>
</dbReference>
<dbReference type="Gramene" id="TraesPARA_EIv1.0_2665670.1">
    <property type="protein sequence ID" value="TraesPARA_EIv1.0_2665670.1.CDS1"/>
    <property type="gene ID" value="TraesPARA_EIv1.0_2665670"/>
</dbReference>
<dbReference type="Gramene" id="TraesPARA_EIv1.0_2666120.1">
    <property type="protein sequence ID" value="TraesPARA_EIv1.0_2666120.1.CDS1"/>
    <property type="gene ID" value="TraesPARA_EIv1.0_2666120"/>
</dbReference>
<dbReference type="Gramene" id="TraesPARA_EIv1.0_2666180.1">
    <property type="protein sequence ID" value="TraesPARA_EIv1.0_2666180.1.CDS1"/>
    <property type="gene ID" value="TraesPARA_EIv1.0_2666180"/>
</dbReference>
<dbReference type="Gramene" id="TraesPARA_EIv1.0_2666700.1">
    <property type="protein sequence ID" value="TraesPARA_EIv1.0_2666700.1.CDS1"/>
    <property type="gene ID" value="TraesPARA_EIv1.0_2666700"/>
</dbReference>
<dbReference type="Gramene" id="TraesPARA_EIv1.0_2666790.1">
    <property type="protein sequence ID" value="TraesPARA_EIv1.0_2666790.1.CDS1"/>
    <property type="gene ID" value="TraesPARA_EIv1.0_2666790"/>
</dbReference>
<dbReference type="Gramene" id="TraesPARA_EIv1.0_2667110.1">
    <property type="protein sequence ID" value="TraesPARA_EIv1.0_2667110.1.CDS1"/>
    <property type="gene ID" value="TraesPARA_EIv1.0_2667110"/>
</dbReference>
<dbReference type="Gramene" id="TraesPARA_EIv1.0_2667840.1">
    <property type="protein sequence ID" value="TraesPARA_EIv1.0_2667840.1.CDS1"/>
    <property type="gene ID" value="TraesPARA_EIv1.0_2667840"/>
</dbReference>
<dbReference type="Gramene" id="TraesPARA_EIv1.0_2668320.1">
    <property type="protein sequence ID" value="TraesPARA_EIv1.0_2668320.1.CDS1"/>
    <property type="gene ID" value="TraesPARA_EIv1.0_2668320"/>
</dbReference>
<dbReference type="Gramene" id="TraesPARA_EIv1.0_2668450.1">
    <property type="protein sequence ID" value="TraesPARA_EIv1.0_2668450.1.CDS1"/>
    <property type="gene ID" value="TraesPARA_EIv1.0_2668450"/>
</dbReference>
<dbReference type="Gramene" id="TraesPARA_EIv1.0_2668840.1">
    <property type="protein sequence ID" value="TraesPARA_EIv1.0_2668840.1.CDS1"/>
    <property type="gene ID" value="TraesPARA_EIv1.0_2668840"/>
</dbReference>
<dbReference type="Gramene" id="TraesPARA_EIv1.0_2669350.1">
    <property type="protein sequence ID" value="TraesPARA_EIv1.0_2669350.1.CDS1"/>
    <property type="gene ID" value="TraesPARA_EIv1.0_2669350"/>
</dbReference>
<dbReference type="Gramene" id="TraesPARA_EIv1.0_2669650.1">
    <property type="protein sequence ID" value="TraesPARA_EIv1.0_2669650.1.CDS1"/>
    <property type="gene ID" value="TraesPARA_EIv1.0_2669650"/>
</dbReference>
<dbReference type="Gramene" id="TraesPARA_EIv1.0_2670020.1">
    <property type="protein sequence ID" value="TraesPARA_EIv1.0_2670020.1.CDS1"/>
    <property type="gene ID" value="TraesPARA_EIv1.0_2670020"/>
</dbReference>
<dbReference type="Gramene" id="TraesPARA_EIv1.0_2670150.1">
    <property type="protein sequence ID" value="TraesPARA_EIv1.0_2670150.1.CDS1"/>
    <property type="gene ID" value="TraesPARA_EIv1.0_2670150"/>
</dbReference>
<dbReference type="Gramene" id="TraesPARA_EIv1.0_2671420.1">
    <property type="protein sequence ID" value="TraesPARA_EIv1.0_2671420.1.CDS1"/>
    <property type="gene ID" value="TraesPARA_EIv1.0_2671420"/>
</dbReference>
<dbReference type="Gramene" id="TraesPARA_EIv1.0_2672650.1">
    <property type="protein sequence ID" value="TraesPARA_EIv1.0_2672650.1.CDS1"/>
    <property type="gene ID" value="TraesPARA_EIv1.0_2672650"/>
</dbReference>
<dbReference type="Gramene" id="TraesPARA_EIv1.0_2674250.1">
    <property type="protein sequence ID" value="TraesPARA_EIv1.0_2674250.1.CDS1"/>
    <property type="gene ID" value="TraesPARA_EIv1.0_2674250"/>
</dbReference>
<dbReference type="Gramene" id="TraesPARA_EIv1.0_2679850.1">
    <property type="protein sequence ID" value="TraesPARA_EIv1.0_2679850.1.CDS1"/>
    <property type="gene ID" value="TraesPARA_EIv1.0_2679850"/>
</dbReference>
<dbReference type="Gramene" id="TraesPARA_EIv1.0_2680220.1">
    <property type="protein sequence ID" value="TraesPARA_EIv1.0_2680220.1.CDS1"/>
    <property type="gene ID" value="TraesPARA_EIv1.0_2680220"/>
</dbReference>
<dbReference type="Gramene" id="TraesPARA_EIv1.0_2680810.1">
    <property type="protein sequence ID" value="TraesPARA_EIv1.0_2680810.1.CDS1"/>
    <property type="gene ID" value="TraesPARA_EIv1.0_2680810"/>
</dbReference>
<dbReference type="Gramene" id="TraesPARA_EIv1.0_2681110.1">
    <property type="protein sequence ID" value="TraesPARA_EIv1.0_2681110.1.CDS1"/>
    <property type="gene ID" value="TraesPARA_EIv1.0_2681110"/>
</dbReference>
<dbReference type="Gramene" id="TraesPARA_EIv1.0_2681430.1">
    <property type="protein sequence ID" value="TraesPARA_EIv1.0_2681430.1.CDS1"/>
    <property type="gene ID" value="TraesPARA_EIv1.0_2681430"/>
</dbReference>
<dbReference type="KEGG" id="taes:803181"/>
<dbReference type="eggNOG" id="ENOG502QRV6">
    <property type="taxonomic scope" value="Eukaryota"/>
</dbReference>
<dbReference type="HOGENOM" id="CLU_028227_2_0_1"/>
<dbReference type="Proteomes" id="UP000019116">
    <property type="component" value="Chloroplast"/>
</dbReference>
<dbReference type="GO" id="GO:0009535">
    <property type="term" value="C:chloroplast thylakoid membrane"/>
    <property type="evidence" value="ECO:0007669"/>
    <property type="project" value="UniProtKB-SubCell"/>
</dbReference>
<dbReference type="GO" id="GO:0009523">
    <property type="term" value="C:photosystem II"/>
    <property type="evidence" value="ECO:0007669"/>
    <property type="project" value="UniProtKB-KW"/>
</dbReference>
<dbReference type="GO" id="GO:0016168">
    <property type="term" value="F:chlorophyll binding"/>
    <property type="evidence" value="ECO:0007669"/>
    <property type="project" value="UniProtKB-UniRule"/>
</dbReference>
<dbReference type="GO" id="GO:0045156">
    <property type="term" value="F:electron transporter, transferring electrons within the cyclic electron transport pathway of photosynthesis activity"/>
    <property type="evidence" value="ECO:0007669"/>
    <property type="project" value="InterPro"/>
</dbReference>
<dbReference type="GO" id="GO:0009772">
    <property type="term" value="P:photosynthetic electron transport in photosystem II"/>
    <property type="evidence" value="ECO:0007669"/>
    <property type="project" value="InterPro"/>
</dbReference>
<dbReference type="FunFam" id="3.10.680.10:FF:000001">
    <property type="entry name" value="Photosystem II CP47 reaction center protein"/>
    <property type="match status" value="1"/>
</dbReference>
<dbReference type="Gene3D" id="3.10.680.10">
    <property type="entry name" value="Photosystem II CP47 reaction center protein"/>
    <property type="match status" value="1"/>
</dbReference>
<dbReference type="HAMAP" id="MF_01495">
    <property type="entry name" value="PSII_PsbB_CP47"/>
    <property type="match status" value="1"/>
</dbReference>
<dbReference type="InterPro" id="IPR000932">
    <property type="entry name" value="PS_antenna-like"/>
</dbReference>
<dbReference type="InterPro" id="IPR036001">
    <property type="entry name" value="PS_II_antenna-like_sf"/>
</dbReference>
<dbReference type="InterPro" id="IPR017486">
    <property type="entry name" value="PSII_PsbB"/>
</dbReference>
<dbReference type="NCBIfam" id="TIGR03039">
    <property type="entry name" value="PS_II_CP47"/>
    <property type="match status" value="1"/>
</dbReference>
<dbReference type="PANTHER" id="PTHR33180">
    <property type="entry name" value="PHOTOSYSTEM II CP43 REACTION CENTER PROTEIN"/>
    <property type="match status" value="1"/>
</dbReference>
<dbReference type="PANTHER" id="PTHR33180:SF37">
    <property type="entry name" value="PHOTOSYSTEM II CP43 REACTION CENTER PROTEIN"/>
    <property type="match status" value="1"/>
</dbReference>
<dbReference type="Pfam" id="PF00421">
    <property type="entry name" value="PSII"/>
    <property type="match status" value="1"/>
</dbReference>
<dbReference type="SUPFAM" id="SSF161077">
    <property type="entry name" value="Photosystem II antenna protein-like"/>
    <property type="match status" value="1"/>
</dbReference>
<name>PSBB_WHEAT</name>
<evidence type="ECO:0000255" key="1">
    <source>
        <dbReference type="HAMAP-Rule" id="MF_01495"/>
    </source>
</evidence>
<evidence type="ECO:0000305" key="2"/>